<proteinExistence type="evidence at protein level"/>
<evidence type="ECO:0000250" key="1">
    <source>
        <dbReference type="UniProtKB" id="Q9DE27"/>
    </source>
</evidence>
<evidence type="ECO:0000269" key="2">
    <source>
    </source>
</evidence>
<evidence type="ECO:0000269" key="3">
    <source>
    </source>
</evidence>
<evidence type="ECO:0000269" key="4">
    <source>
    </source>
</evidence>
<evidence type="ECO:0000269" key="5">
    <source>
    </source>
</evidence>
<evidence type="ECO:0000269" key="6">
    <source>
    </source>
</evidence>
<evidence type="ECO:0000269" key="7">
    <source>
    </source>
</evidence>
<evidence type="ECO:0000269" key="8">
    <source>
    </source>
</evidence>
<evidence type="ECO:0000269" key="9">
    <source>
    </source>
</evidence>
<evidence type="ECO:0000269" key="10">
    <source>
    </source>
</evidence>
<evidence type="ECO:0000269" key="11">
    <source>
    </source>
</evidence>
<evidence type="ECO:0000269" key="12">
    <source>
    </source>
</evidence>
<evidence type="ECO:0000269" key="13">
    <source>
    </source>
</evidence>
<evidence type="ECO:0000269" key="14">
    <source>
    </source>
</evidence>
<evidence type="ECO:0000269" key="15">
    <source>
    </source>
</evidence>
<evidence type="ECO:0000269" key="16">
    <source>
    </source>
</evidence>
<evidence type="ECO:0000269" key="17">
    <source>
    </source>
</evidence>
<evidence type="ECO:0000269" key="18">
    <source>
    </source>
</evidence>
<evidence type="ECO:0000269" key="19">
    <source>
    </source>
</evidence>
<evidence type="ECO:0000269" key="20">
    <source>
    </source>
</evidence>
<evidence type="ECO:0000269" key="21">
    <source>
    </source>
</evidence>
<evidence type="ECO:0000269" key="22">
    <source>
    </source>
</evidence>
<evidence type="ECO:0000269" key="23">
    <source>
    </source>
</evidence>
<evidence type="ECO:0000269" key="24">
    <source>
    </source>
</evidence>
<evidence type="ECO:0000269" key="25">
    <source>
    </source>
</evidence>
<evidence type="ECO:0000269" key="26">
    <source>
    </source>
</evidence>
<evidence type="ECO:0000269" key="27">
    <source>
    </source>
</evidence>
<evidence type="ECO:0000269" key="28">
    <source>
    </source>
</evidence>
<evidence type="ECO:0000269" key="29">
    <source>
    </source>
</evidence>
<evidence type="ECO:0000269" key="30">
    <source ref="14"/>
</evidence>
<evidence type="ECO:0000303" key="31">
    <source>
    </source>
</evidence>
<evidence type="ECO:0000305" key="32"/>
<evidence type="ECO:0000305" key="33">
    <source>
    </source>
</evidence>
<evidence type="ECO:0007744" key="34">
    <source>
        <dbReference type="PDB" id="7AHO"/>
    </source>
</evidence>
<evidence type="ECO:0007744" key="35">
    <source>
    </source>
</evidence>
<evidence type="ECO:0007744" key="36">
    <source>
    </source>
</evidence>
<evidence type="ECO:0007744" key="37">
    <source>
    </source>
</evidence>
<evidence type="ECO:0007744" key="38">
    <source>
    </source>
</evidence>
<evidence type="ECO:0007744" key="39">
    <source>
    </source>
</evidence>
<evidence type="ECO:0007829" key="40">
    <source>
        <dbReference type="PDB" id="2CQA"/>
    </source>
</evidence>
<evidence type="ECO:0007829" key="41">
    <source>
        <dbReference type="PDB" id="3UK6"/>
    </source>
</evidence>
<evidence type="ECO:0007829" key="42">
    <source>
        <dbReference type="PDB" id="6H7X"/>
    </source>
</evidence>
<evidence type="ECO:0007829" key="43">
    <source>
        <dbReference type="PDB" id="6K0R"/>
    </source>
</evidence>
<evidence type="ECO:0007829" key="44">
    <source>
        <dbReference type="PDB" id="7OLE"/>
    </source>
</evidence>
<evidence type="ECO:0007829" key="45">
    <source>
        <dbReference type="PDB" id="8XVT"/>
    </source>
</evidence>
<evidence type="ECO:0007829" key="46">
    <source>
        <dbReference type="PDB" id="9C57"/>
    </source>
</evidence>
<keyword id="KW-0002">3D-structure</keyword>
<keyword id="KW-0007">Acetylation</keyword>
<keyword id="KW-0010">Activator</keyword>
<keyword id="KW-0025">Alternative splicing</keyword>
<keyword id="KW-0067">ATP-binding</keyword>
<keyword id="KW-0156">Chromatin regulator</keyword>
<keyword id="KW-0963">Cytoplasm</keyword>
<keyword id="KW-0903">Direct protein sequencing</keyword>
<keyword id="KW-0227">DNA damage</keyword>
<keyword id="KW-0233">DNA recombination</keyword>
<keyword id="KW-0234">DNA repair</keyword>
<keyword id="KW-0341">Growth regulation</keyword>
<keyword id="KW-0347">Helicase</keyword>
<keyword id="KW-0378">Hydrolase</keyword>
<keyword id="KW-1017">Isopeptide bond</keyword>
<keyword id="KW-0472">Membrane</keyword>
<keyword id="KW-0547">Nucleotide-binding</keyword>
<keyword id="KW-0539">Nucleus</keyword>
<keyword id="KW-0597">Phosphoprotein</keyword>
<keyword id="KW-1267">Proteomics identification</keyword>
<keyword id="KW-1185">Reference proteome</keyword>
<keyword id="KW-0804">Transcription</keyword>
<keyword id="KW-0805">Transcription regulation</keyword>
<keyword id="KW-0832">Ubl conjugation</keyword>
<sequence>MATVTATTKVPEIRDVTRIERIGAHSHIRGLGLDDALEPRQASQGMVGQLAARRAAGVVLEMIREGKIAGRAVLIAGQPGTGKTAIAMGMAQALGPDTPFTAIAGSEIFSLEMSKTEALTQAFRRSIGVRIKEETEIIEGEVVEIQIDRPATGTGSKVGKLTLKTTEMETIYDLGTKMIESLTKDKVQAGDVITIDKATGKISKLGRSFTRARDYDAMGSQTKFVQCPDGELQKRKEVVHTVSLHEIDVINSRTQGFLALFSGDTGEIKSEVREQINAKVAEWREEGKAEIIPGVLFIDEVHMLDIESFSFLNRALESDMAPVLIMATNRGITRIRGTSYQSPHGIPIDLLDRLLIVSTTPYSEKDTKQILRIRCEEEDVEMSEDAYTVLTRIGLETSLRYAIQLITAASLVCRKRKGTEVQVDDIKRVYSLFLDESRSTQYMKEYQDAFLFNELKGETMDTS</sequence>
<name>RUVB2_HUMAN</name>
<organism>
    <name type="scientific">Homo sapiens</name>
    <name type="common">Human</name>
    <dbReference type="NCBI Taxonomy" id="9606"/>
    <lineage>
        <taxon>Eukaryota</taxon>
        <taxon>Metazoa</taxon>
        <taxon>Chordata</taxon>
        <taxon>Craniata</taxon>
        <taxon>Vertebrata</taxon>
        <taxon>Euteleostomi</taxon>
        <taxon>Mammalia</taxon>
        <taxon>Eutheria</taxon>
        <taxon>Euarchontoglires</taxon>
        <taxon>Primates</taxon>
        <taxon>Haplorrhini</taxon>
        <taxon>Catarrhini</taxon>
        <taxon>Hominidae</taxon>
        <taxon>Homo</taxon>
    </lineage>
</organism>
<accession>Q9Y230</accession>
<accession>B3KQ59</accession>
<accession>E7ETE5</accession>
<accession>Q6FIB9</accession>
<accession>Q6PK27</accession>
<accession>Q9Y361</accession>
<comment type="function">
    <text evidence="2 3 5 8 10 11 12 19 20 22 24 28">Possesses single-stranded DNA-stimulated ATPase and ATP-dependent DNA helicase (5' to 3') activity; hexamerization is thought to be critical for ATP hydrolysis and adjacent subunits in the ring-like structure contribute to the ATPase activity (PubMed:10428817, PubMed:17157868, PubMed:33205750). Component of the NuA4 histone acetyltransferase complex which is involved in transcriptional activation of select genes principally by acetylation of nucleosomal histones H4 and H2A (PubMed:14966270). This modification may both alter nucleosome -DNA interactions and promote interaction of the modified histones with other proteins which positively regulate transcription (PubMed:14966270). This complex may be required for the activation of transcriptional programs associated with oncogene and proto-oncogene mediated growth induction, tumor suppressor mediated growth arrest and replicative senescence, apoptosis, and DNA repair (PubMed:14966270). The NuA4 complex ATPase and helicase activities seem to be, at least in part, contributed by the association of RUVBL1 and RUVBL2 with EP400 (PubMed:14966270). NuA4 may also play a direct role in DNA repair when recruited to sites of DNA damage (PubMed:14966270). Component of a SWR1-like complex that specifically mediates the removal of histone H2A.Z/H2AZ1 from the nucleosome (PubMed:24463511). Proposed core component of the chromatin remodeling INO80 complex which exhibits DNA- and nucleosome-activated ATPase activity and catalyzes ATP-dependent nucleosome sliding (PubMed:16230350, PubMed:21303910). Plays an essential role in oncogenic transformation by MYC and also modulates transcriptional activation by the LEF1/TCF1-CTNNB1 complex (PubMed:10882073, PubMed:16014379). May also inhibit the transcriptional activity of ATF2 (PubMed:11713276). Involved in the endoplasmic reticulum (ER)-associated degradation (ERAD) pathway where it negatively regulates expression of ER stress response genes (PubMed:25652260). May play a role in regulating the composition of the U5 snRNP complex (PubMed:28561026).</text>
</comment>
<comment type="catalytic activity">
    <reaction evidence="2 12">
        <text>ATP + H2O = ADP + phosphate + H(+)</text>
        <dbReference type="Rhea" id="RHEA:13065"/>
        <dbReference type="ChEBI" id="CHEBI:15377"/>
        <dbReference type="ChEBI" id="CHEBI:15378"/>
        <dbReference type="ChEBI" id="CHEBI:30616"/>
        <dbReference type="ChEBI" id="CHEBI:43474"/>
        <dbReference type="ChEBI" id="CHEBI:456216"/>
        <dbReference type="EC" id="3.6.4.12"/>
    </reaction>
    <physiologicalReaction direction="left-to-right" evidence="33">
        <dbReference type="Rhea" id="RHEA:13066"/>
    </physiologicalReaction>
</comment>
<comment type="subunit">
    <text evidence="2 3 4 5 7 8 9 10 11 12 13 14 15 16 17 18 19 20 21 23 24 25 27 28 29 32">Forms homohexameric rings (PubMed:33205750). Can form a dodecamer with RUVBL1 made of two stacked hexameric rings; however, even though RUVBL1 and RUVBL2 are present in equimolar ratio, the oligomeric status of each hexamer is not known (PubMed:33205750). Oligomerization may regulate binding to nucleic acids and conversely, binding to nucleic acids may affect the dodecameric assembly. Interaction of the complex with DHX34 results in conformational changes of the N-terminus of the RUVBL2 subunits, resulting in loss of nucleotide binding ability and ATP hydrolysis of the complex (PubMed:33205750). Interacts with the transcriptional activation domain of MYC. Interacts with ATF2. Component of the RNA polymerase II holoenzyme complex. May also act to bridge the LEF1/TCF1-CTNNB1 complex and TBP. Component of the NuA4 histone acetyltransferase complex which contains the catalytic subunit KAT5/TIP60 and the subunits EP400, TRRAP/PAF400, BRD8/SMAP, EPC1, DMAP1/DNMAP1, RUVBL1/TIP49, RUVBL2, ING3, actin, ACTL6A/BAF53A, MORF4L1/MRG15, MORF4L2/MRGX, MRGBP, YEATS4/GAS41, VPS72/YL1 and MEAF6. The NuA4 complex interacts with MYC and the adenovirus E1A protein. RUVBL2 interacts with EP400. Component of a NuA4-related complex which contains EP400, TRRAP/PAF400, SRCAP, BRD8/SMAP, EPC1, DMAP1/DNMAP1, RUVBL1/TIP49, RUVBL2, actin, ACTL6A/BAF53A, VPS72 and YEATS4/GAS41. Interacts with NPAT. Component of the chromatin-remodeling INO80 complex; specifically part of a complex module associated with the helicase ATP-binding and the helicase C-terminal domain of INO80. Component of some MLL1/MLL complex, at least composed of the core components KMT2A/MLL1, ASH2L, HCFC1/HCF1, WDR5 and RBBP5, as well as the facultative components BACC1, CHD8, E2F6, HSP70, INO80C, KANSL1, LAS1L, MAX, MCRS1, MGA, MYST1/MOF, PELP1, PHF20, PRP31, RING2, RUVB1/TIP49A, RUVB2/TIP49B, SENP3, TAF1, TAF4, TAF6, TAF7, TAF9 and TEX10. Interacts with IGHMBP2. Interacts with TELO2. Interacts with HINT1. Component of a SWR1-like complex. Component of the R2TP complex composed at least of RUVBL1, RUVBL2, RPAP3 and PIHD1 (PubMed:20864032). Component of the PAQosome complex which is responsible for the biogenesis of several protein complexes and which consists of R2TP complex members RUVBL1, RUVBL2, RPAP3 and PIH1D1, URI complex members PFDN2, PFDN6, PDRG1, UXT and URI1 as well as ASDURF, POLR2E and DNAAF10/WDR92 (PubMed:31738558). Interacts with ITFG1 (PubMed:25437307). Interacts with ZMYND10 (PubMed:29601588). Interacts with WAC; WAC positively regulates MTOR activity by promoting the assembly of the TTT complex composed of TELO2, TTI1 and TTI2 and the RUVBL complex composed of RUVBL1 and RUVBL2 into the TTT-RUVBL complex which leads to the dimerization of the mTORC1 complex and its subsequent activation (PubMed:26812014). Forms a complex with APPL1 and APPL2 (PubMed:19433865). Interacts with ZNHIT2 (via HIT-type zinc finger) in the presence of ATP or ADP; shows a stronger interaction in the presence of ADP (PubMed:28561026). The RUVBL1/RUVBL2 complex interacts with ZNHIT1 (via HIT-type zinc finger), ZNHIT3 (via HIT-type zinc finger), ZNHIT6 (via HIT-type zinc finger) and DDX59/ZNHIT5 (via HIT-type zinc finger) in the presence of ADP (PubMed:28561026). Interacts with NOPCHAP1; the interaction is direct and disrupted upon ATP binding (PubMed:33367824). Interacts with SMG1 (PubMed:33205750).</text>
</comment>
<comment type="subunit">
    <text evidence="26">(Microbial infection) Interacts with Mumps L polymerase; this interaction regulates the viral transcription.</text>
</comment>
<comment type="interaction">
    <interactant intactId="EBI-352939">
        <id>Q9Y230</id>
    </interactant>
    <interactant intactId="EBI-10261970">
        <id>Q8IW40</id>
        <label>CCDC103</label>
    </interactant>
    <organismsDiffer>false</organismsDiffer>
    <experiments>3</experiments>
</comment>
<comment type="interaction">
    <interactant intactId="EBI-352939">
        <id>Q9Y230</id>
    </interactant>
    <interactant intactId="EBI-356960">
        <id>Q9UDY4</id>
        <label>DNAJB4</label>
    </interactant>
    <organismsDiffer>false</organismsDiffer>
    <experiments>3</experiments>
</comment>
<comment type="interaction">
    <interactant intactId="EBI-352939">
        <id>Q9Y230</id>
    </interactant>
    <interactant intactId="EBI-749988">
        <id>Q9BVM2</id>
        <label>DPCD</label>
    </interactant>
    <organismsDiffer>false</organismsDiffer>
    <experiments>13</experiments>
</comment>
<comment type="interaction">
    <interactant intactId="EBI-352939">
        <id>Q9Y230</id>
    </interactant>
    <interactant intactId="EBI-399163">
        <id>Q96L91</id>
        <label>EP400</label>
    </interactant>
    <organismsDiffer>false</organismsDiffer>
    <experiments>5</experiments>
</comment>
<comment type="interaction">
    <interactant intactId="EBI-352939">
        <id>Q9Y230</id>
    </interactant>
    <interactant intactId="EBI-739832">
        <id>Q8TBB1</id>
        <label>LNX1</label>
    </interactant>
    <organismsDiffer>false</organismsDiffer>
    <experiments>6</experiments>
</comment>
<comment type="interaction">
    <interactant intactId="EBI-352939">
        <id>Q9Y230</id>
    </interactant>
    <interactant intactId="EBI-353675">
        <id>Q9Y265</id>
        <label>RUVBL1</label>
    </interactant>
    <organismsDiffer>false</organismsDiffer>
    <experiments>40</experiments>
</comment>
<comment type="interaction">
    <interactant intactId="EBI-352939">
        <id>Q9Y230</id>
    </interactant>
    <interactant intactId="EBI-352939">
        <id>Q9Y230</id>
        <label>RUVBL2</label>
    </interactant>
    <organismsDiffer>false</organismsDiffer>
    <experiments>3</experiments>
</comment>
<comment type="interaction">
    <interactant intactId="EBI-352939">
        <id>Q9Y230</id>
    </interactant>
    <interactant intactId="EBI-765538">
        <id>P25490</id>
        <label>YY1</label>
    </interactant>
    <organismsDiffer>false</organismsDiffer>
    <experiments>11</experiments>
</comment>
<comment type="interaction">
    <interactant intactId="EBI-352939">
        <id>Q9Y230</id>
    </interactant>
    <interactant intactId="EBI-26898155">
        <id>Q8BPA8</id>
        <label>Dpcd</label>
    </interactant>
    <organismsDiffer>true</organismsDiffer>
    <experiments>2</experiments>
</comment>
<comment type="subcellular location">
    <subcellularLocation>
        <location>Nucleus matrix</location>
    </subcellularLocation>
    <subcellularLocation>
        <location>Nucleus</location>
        <location>Nucleoplasm</location>
    </subcellularLocation>
    <subcellularLocation>
        <location>Cytoplasm</location>
    </subcellularLocation>
    <subcellularLocation>
        <location>Membrane</location>
    </subcellularLocation>
    <subcellularLocation>
        <location evidence="1">Dynein axonemal particle</location>
    </subcellularLocation>
    <text>Mainly localized in the nucleus, associated with nuclear matrix or in the nuclear cytosol. Although it is also present in the cytoplasm and associated with the cell membranes.</text>
</comment>
<comment type="alternative products">
    <event type="alternative splicing"/>
    <isoform>
        <id>Q9Y230-1</id>
        <name>1</name>
        <sequence type="displayed"/>
    </isoform>
    <isoform>
        <id>Q9Y230-2</id>
        <name>2</name>
        <sequence type="described" ref="VSP_056584"/>
    </isoform>
</comment>
<comment type="tissue specificity">
    <text evidence="2">Ubiquitously expressed. Highly expressed in testis and thymus.</text>
</comment>
<comment type="domain">
    <text>The C-terminal domain is required for association with ATF2.</text>
</comment>
<comment type="similarity">
    <text evidence="32">Belongs to the RuvB family.</text>
</comment>
<comment type="sequence caution" evidence="32">
    <conflict type="frameshift">
        <sequence resource="EMBL-CDS" id="AAD34041"/>
    </conflict>
</comment>
<comment type="sequence caution" evidence="32">
    <conflict type="frameshift">
        <sequence resource="EMBL-CDS" id="AAH08355"/>
    </conflict>
</comment>
<comment type="online information" name="Atlas of Genetics and Cytogenetics in Oncology and Haematology">
    <link uri="https://atlasgeneticsoncology.org/gene/42185/RUVBL2"/>
</comment>
<feature type="initiator methionine" description="Removed" evidence="6 30 35 36 38">
    <location>
        <position position="1"/>
    </location>
</feature>
<feature type="chain" id="PRO_0000165644" description="RuvB-like 2">
    <location>
        <begin position="2"/>
        <end position="463"/>
    </location>
</feature>
<feature type="binding site">
    <location>
        <begin position="77"/>
        <end position="84"/>
    </location>
    <ligand>
        <name>ATP</name>
        <dbReference type="ChEBI" id="CHEBI:30616"/>
    </ligand>
</feature>
<feature type="modified residue" description="N-acetylalanine" evidence="30 35 36 38">
    <location>
        <position position="2"/>
    </location>
</feature>
<feature type="modified residue" description="Phosphoserine" evidence="37">
    <location>
        <position position="437"/>
    </location>
</feature>
<feature type="cross-link" description="Glycyl lysine isopeptide (Lys-Gly) (interchain with G-Cter in SUMO2)" evidence="39">
    <location>
        <position position="9"/>
    </location>
</feature>
<feature type="cross-link" description="Glycyl lysine isopeptide (Lys-Gly) (interchain with G-Cter in SUMO2)" evidence="39">
    <location>
        <position position="444"/>
    </location>
</feature>
<feature type="cross-link" description="Glycyl lysine isopeptide (Lys-Gly) (interchain with G-Cter in SUMO2)" evidence="39">
    <location>
        <position position="456"/>
    </location>
</feature>
<feature type="splice variant" id="VSP_056584" description="In isoform 2." evidence="31">
    <location>
        <begin position="1"/>
        <end position="45"/>
    </location>
</feature>
<feature type="mutagenesis site" description="No effect on interaction with NOPCHAP1." evidence="29">
    <original>K</original>
    <variation>M</variation>
    <location>
        <position position="83"/>
    </location>
</feature>
<feature type="mutagenesis site" description="Abolishes ATPase activity." evidence="12">
    <original>D</original>
    <variation>N</variation>
    <location>
        <position position="299"/>
    </location>
</feature>
<feature type="mutagenesis site" description="Reduces ATPase activity. Decreases interaction with NOPCHAP1. No effect on formation of RUVBL1-RUVBL2 heteromeric complex." evidence="28 29">
    <original>E</original>
    <variation>Q</variation>
    <location>
        <position position="300"/>
    </location>
</feature>
<feature type="sequence conflict" description="In Ref. 6; AAD34041." evidence="32" ref="6">
    <original>D</original>
    <variation>N</variation>
    <location>
        <position position="214"/>
    </location>
</feature>
<feature type="sequence conflict" description="In Ref. 5; AA sequence." evidence="32" ref="5">
    <original>FL</original>
    <variation>YV</variation>
    <location>
        <begin position="257"/>
        <end position="258"/>
    </location>
</feature>
<feature type="turn" evidence="41">
    <location>
        <begin position="19"/>
        <end position="22"/>
    </location>
</feature>
<feature type="turn" evidence="46">
    <location>
        <begin position="24"/>
        <end position="27"/>
    </location>
</feature>
<feature type="strand" evidence="43">
    <location>
        <begin position="41"/>
        <end position="43"/>
    </location>
</feature>
<feature type="strand" evidence="43">
    <location>
        <begin position="45"/>
        <end position="48"/>
    </location>
</feature>
<feature type="helix" evidence="43">
    <location>
        <begin position="50"/>
        <end position="64"/>
    </location>
</feature>
<feature type="turn" evidence="42">
    <location>
        <begin position="66"/>
        <end position="70"/>
    </location>
</feature>
<feature type="strand" evidence="43">
    <location>
        <begin position="72"/>
        <end position="76"/>
    </location>
</feature>
<feature type="helix" evidence="43">
    <location>
        <begin position="83"/>
        <end position="92"/>
    </location>
</feature>
<feature type="strand" evidence="43">
    <location>
        <begin position="96"/>
        <end position="98"/>
    </location>
</feature>
<feature type="strand" evidence="43">
    <location>
        <begin position="100"/>
        <end position="104"/>
    </location>
</feature>
<feature type="helix" evidence="43">
    <location>
        <begin position="105"/>
        <end position="107"/>
    </location>
</feature>
<feature type="strand" evidence="43">
    <location>
        <begin position="111"/>
        <end position="113"/>
    </location>
</feature>
<feature type="helix" evidence="43">
    <location>
        <begin position="117"/>
        <end position="125"/>
    </location>
</feature>
<feature type="strand" evidence="43">
    <location>
        <begin position="127"/>
        <end position="130"/>
    </location>
</feature>
<feature type="strand" evidence="44">
    <location>
        <begin position="132"/>
        <end position="138"/>
    </location>
</feature>
<feature type="strand" evidence="46">
    <location>
        <begin position="147"/>
        <end position="149"/>
    </location>
</feature>
<feature type="strand" evidence="40">
    <location>
        <begin position="152"/>
        <end position="156"/>
    </location>
</feature>
<feature type="strand" evidence="46">
    <location>
        <begin position="158"/>
        <end position="160"/>
    </location>
</feature>
<feature type="strand" evidence="46">
    <location>
        <begin position="162"/>
        <end position="165"/>
    </location>
</feature>
<feature type="strand" evidence="46">
    <location>
        <begin position="168"/>
        <end position="171"/>
    </location>
</feature>
<feature type="helix" evidence="46">
    <location>
        <begin position="179"/>
        <end position="183"/>
    </location>
</feature>
<feature type="strand" evidence="42">
    <location>
        <begin position="191"/>
        <end position="194"/>
    </location>
</feature>
<feature type="turn" evidence="46">
    <location>
        <begin position="197"/>
        <end position="199"/>
    </location>
</feature>
<feature type="strand" evidence="46">
    <location>
        <begin position="205"/>
        <end position="207"/>
    </location>
</feature>
<feature type="strand" evidence="46">
    <location>
        <begin position="209"/>
        <end position="211"/>
    </location>
</feature>
<feature type="turn" evidence="45">
    <location>
        <begin position="212"/>
        <end position="214"/>
    </location>
</feature>
<feature type="strand" evidence="46">
    <location>
        <begin position="216"/>
        <end position="218"/>
    </location>
</feature>
<feature type="strand" evidence="44">
    <location>
        <begin position="232"/>
        <end position="239"/>
    </location>
</feature>
<feature type="strand" evidence="43">
    <location>
        <begin position="241"/>
        <end position="243"/>
    </location>
</feature>
<feature type="helix" evidence="43">
    <location>
        <begin position="244"/>
        <end position="250"/>
    </location>
</feature>
<feature type="strand" evidence="45">
    <location>
        <begin position="251"/>
        <end position="254"/>
    </location>
</feature>
<feature type="helix" evidence="46">
    <location>
        <begin position="256"/>
        <end position="258"/>
    </location>
</feature>
<feature type="helix" evidence="46">
    <location>
        <begin position="259"/>
        <end position="262"/>
    </location>
</feature>
<feature type="helix" evidence="43">
    <location>
        <begin position="270"/>
        <end position="286"/>
    </location>
</feature>
<feature type="strand" evidence="43">
    <location>
        <begin position="290"/>
        <end position="293"/>
    </location>
</feature>
<feature type="strand" evidence="43">
    <location>
        <begin position="295"/>
        <end position="299"/>
    </location>
</feature>
<feature type="turn" evidence="43">
    <location>
        <begin position="300"/>
        <end position="302"/>
    </location>
</feature>
<feature type="helix" evidence="43">
    <location>
        <begin position="306"/>
        <end position="316"/>
    </location>
</feature>
<feature type="strand" evidence="43">
    <location>
        <begin position="318"/>
        <end position="320"/>
    </location>
</feature>
<feature type="strand" evidence="43">
    <location>
        <begin position="323"/>
        <end position="329"/>
    </location>
</feature>
<feature type="strand" evidence="43">
    <location>
        <begin position="331"/>
        <end position="334"/>
    </location>
</feature>
<feature type="strand" evidence="43">
    <location>
        <begin position="341"/>
        <end position="343"/>
    </location>
</feature>
<feature type="helix" evidence="43">
    <location>
        <begin position="348"/>
        <end position="351"/>
    </location>
</feature>
<feature type="strand" evidence="43">
    <location>
        <begin position="354"/>
        <end position="358"/>
    </location>
</feature>
<feature type="helix" evidence="43">
    <location>
        <begin position="364"/>
        <end position="375"/>
    </location>
</feature>
<feature type="turn" evidence="43">
    <location>
        <begin position="376"/>
        <end position="379"/>
    </location>
</feature>
<feature type="helix" evidence="43">
    <location>
        <begin position="384"/>
        <end position="396"/>
    </location>
</feature>
<feature type="helix" evidence="43">
    <location>
        <begin position="399"/>
        <end position="415"/>
    </location>
</feature>
<feature type="strand" evidence="43">
    <location>
        <begin position="419"/>
        <end position="421"/>
    </location>
</feature>
<feature type="helix" evidence="43">
    <location>
        <begin position="424"/>
        <end position="432"/>
    </location>
</feature>
<feature type="helix" evidence="43">
    <location>
        <begin position="436"/>
        <end position="449"/>
    </location>
</feature>
<dbReference type="EC" id="3.6.4.12" evidence="2 12"/>
<dbReference type="EMBL" id="Y18417">
    <property type="protein sequence ID" value="CAB46270.1"/>
    <property type="molecule type" value="mRNA"/>
</dbReference>
<dbReference type="EMBL" id="AB024301">
    <property type="protein sequence ID" value="BAA76708.1"/>
    <property type="molecule type" value="mRNA"/>
</dbReference>
<dbReference type="EMBL" id="AF155138">
    <property type="protein sequence ID" value="AAD38073.1"/>
    <property type="molecule type" value="mRNA"/>
</dbReference>
<dbReference type="EMBL" id="AF124607">
    <property type="protein sequence ID" value="AAF87087.1"/>
    <property type="molecule type" value="mRNA"/>
</dbReference>
<dbReference type="EMBL" id="AF151804">
    <property type="protein sequence ID" value="AAD34041.1"/>
    <property type="status" value="ALT_FRAME"/>
    <property type="molecule type" value="mRNA"/>
</dbReference>
<dbReference type="EMBL" id="AL136743">
    <property type="protein sequence ID" value="CAB66677.1"/>
    <property type="molecule type" value="mRNA"/>
</dbReference>
<dbReference type="EMBL" id="AK057498">
    <property type="protein sequence ID" value="BAG51921.1"/>
    <property type="molecule type" value="mRNA"/>
</dbReference>
<dbReference type="EMBL" id="AK074542">
    <property type="protein sequence ID" value="BAC11048.1"/>
    <property type="molecule type" value="mRNA"/>
</dbReference>
<dbReference type="EMBL" id="CR533507">
    <property type="protein sequence ID" value="CAG38538.1"/>
    <property type="molecule type" value="mRNA"/>
</dbReference>
<dbReference type="EMBL" id="AC008687">
    <property type="status" value="NOT_ANNOTATED_CDS"/>
    <property type="molecule type" value="Genomic_DNA"/>
</dbReference>
<dbReference type="EMBL" id="CH471177">
    <property type="protein sequence ID" value="EAW52426.1"/>
    <property type="molecule type" value="Genomic_DNA"/>
</dbReference>
<dbReference type="EMBL" id="CH471177">
    <property type="protein sequence ID" value="EAW52430.1"/>
    <property type="molecule type" value="Genomic_DNA"/>
</dbReference>
<dbReference type="EMBL" id="BC000428">
    <property type="protein sequence ID" value="AAH00428.1"/>
    <property type="molecule type" value="mRNA"/>
</dbReference>
<dbReference type="EMBL" id="BC004531">
    <property type="protein sequence ID" value="AAH04531.1"/>
    <property type="molecule type" value="mRNA"/>
</dbReference>
<dbReference type="EMBL" id="BC008355">
    <property type="protein sequence ID" value="AAH08355.1"/>
    <property type="status" value="ALT_FRAME"/>
    <property type="molecule type" value="mRNA"/>
</dbReference>
<dbReference type="CCDS" id="CCDS42588.1">
    <molecule id="Q9Y230-1"/>
</dbReference>
<dbReference type="PIR" id="T46313">
    <property type="entry name" value="T46313"/>
</dbReference>
<dbReference type="RefSeq" id="NP_001308120.1">
    <molecule id="Q9Y230-2"/>
    <property type="nucleotide sequence ID" value="NM_001321191.1"/>
</dbReference>
<dbReference type="RefSeq" id="NP_006657.1">
    <molecule id="Q9Y230-1"/>
    <property type="nucleotide sequence ID" value="NM_006666.3"/>
</dbReference>
<dbReference type="RefSeq" id="XP_011524632.1">
    <property type="nucleotide sequence ID" value="XM_011526330.1"/>
</dbReference>
<dbReference type="PDB" id="2CQA">
    <property type="method" value="NMR"/>
    <property type="chains" value="A=132-213"/>
</dbReference>
<dbReference type="PDB" id="2XSZ">
    <property type="method" value="X-ray"/>
    <property type="resolution" value="3.00 A"/>
    <property type="chains" value="D/E/F=2-133, D/E/F=238-463"/>
</dbReference>
<dbReference type="PDB" id="3UK6">
    <property type="method" value="X-ray"/>
    <property type="resolution" value="2.95 A"/>
    <property type="chains" value="A/B/C/D/E/F/G/H/I/J/K/L=1-132, A/B/C/D/E/F/G/H/I/J/K/L=239-463"/>
</dbReference>
<dbReference type="PDB" id="5OAF">
    <property type="method" value="EM"/>
    <property type="resolution" value="4.06 A"/>
    <property type="chains" value="B/D/F=1-463"/>
</dbReference>
<dbReference type="PDB" id="6FO1">
    <property type="method" value="EM"/>
    <property type="resolution" value="3.57 A"/>
    <property type="chains" value="D/E/F=1-463"/>
</dbReference>
<dbReference type="PDB" id="6H7X">
    <property type="method" value="X-ray"/>
    <property type="resolution" value="2.89 A"/>
    <property type="chains" value="A=1-463"/>
</dbReference>
<dbReference type="PDB" id="6HTS">
    <property type="method" value="EM"/>
    <property type="resolution" value="4.80 A"/>
    <property type="chains" value="B/D/F=1-463"/>
</dbReference>
<dbReference type="PDB" id="6IGM">
    <property type="method" value="EM"/>
    <property type="resolution" value="4.00 A"/>
    <property type="chains" value="B/D/F=1-463"/>
</dbReference>
<dbReference type="PDB" id="6K0R">
    <property type="method" value="X-ray"/>
    <property type="resolution" value="2.50 A"/>
    <property type="chains" value="D/E/F/J/K/L=1-133, D/E/F/J/K/L=238-463"/>
</dbReference>
<dbReference type="PDB" id="6QI8">
    <property type="method" value="EM"/>
    <property type="resolution" value="3.75 A"/>
    <property type="chains" value="D/E/F=1-463"/>
</dbReference>
<dbReference type="PDB" id="6QI9">
    <property type="method" value="EM"/>
    <property type="resolution" value="4.63 A"/>
    <property type="chains" value="D/E/F=1-463"/>
</dbReference>
<dbReference type="PDB" id="7AHO">
    <property type="method" value="EM"/>
    <property type="resolution" value="4.18 A"/>
    <property type="chains" value="D/E/F=1-463"/>
</dbReference>
<dbReference type="PDB" id="7OLE">
    <property type="method" value="EM"/>
    <property type="resolution" value="3.41 A"/>
    <property type="chains" value="B/D/F=1-463"/>
</dbReference>
<dbReference type="PDB" id="7P6X">
    <property type="method" value="EM"/>
    <property type="resolution" value="4.10 A"/>
    <property type="chains" value="D/E/F=1-463"/>
</dbReference>
<dbReference type="PDB" id="7ZI4">
    <property type="method" value="EM"/>
    <property type="resolution" value="3.20 A"/>
    <property type="chains" value="B/D/F=1-463"/>
</dbReference>
<dbReference type="PDB" id="8QR1">
    <property type="method" value="EM"/>
    <property type="resolution" value="2.40 A"/>
    <property type="chains" value="D/H/J=1-463"/>
</dbReference>
<dbReference type="PDB" id="8X15">
    <property type="method" value="EM"/>
    <property type="resolution" value="3.20 A"/>
    <property type="chains" value="N/P/R=1-463"/>
</dbReference>
<dbReference type="PDB" id="8X19">
    <property type="method" value="EM"/>
    <property type="resolution" value="3.20 A"/>
    <property type="chains" value="N/P/R=1-463"/>
</dbReference>
<dbReference type="PDB" id="8X1C">
    <property type="method" value="EM"/>
    <property type="resolution" value="3.20 A"/>
    <property type="chains" value="N/P/R=1-463"/>
</dbReference>
<dbReference type="PDB" id="8XVG">
    <property type="method" value="EM"/>
    <property type="resolution" value="9.40 A"/>
    <property type="chains" value="B/D/F=1-463"/>
</dbReference>
<dbReference type="PDB" id="8XVT">
    <property type="method" value="EM"/>
    <property type="resolution" value="3.20 A"/>
    <property type="chains" value="B/D/F=1-463"/>
</dbReference>
<dbReference type="PDB" id="9C57">
    <property type="method" value="EM"/>
    <property type="resolution" value="2.75 A"/>
    <property type="chains" value="B/D/F=1-463"/>
</dbReference>
<dbReference type="PDB" id="9C62">
    <property type="method" value="EM"/>
    <property type="resolution" value="5.28 A"/>
    <property type="chains" value="B/D/F=1-463"/>
</dbReference>
<dbReference type="PDB" id="9EMA">
    <property type="method" value="EM"/>
    <property type="resolution" value="2.40 A"/>
    <property type="chains" value="D/E/F=1-463"/>
</dbReference>
<dbReference type="PDB" id="9EMC">
    <property type="method" value="EM"/>
    <property type="resolution" value="3.26 A"/>
    <property type="chains" value="D/E/F=1-463"/>
</dbReference>
<dbReference type="PDBsum" id="2CQA"/>
<dbReference type="PDBsum" id="2XSZ"/>
<dbReference type="PDBsum" id="3UK6"/>
<dbReference type="PDBsum" id="5OAF"/>
<dbReference type="PDBsum" id="6FO1"/>
<dbReference type="PDBsum" id="6H7X"/>
<dbReference type="PDBsum" id="6HTS"/>
<dbReference type="PDBsum" id="6IGM"/>
<dbReference type="PDBsum" id="6K0R"/>
<dbReference type="PDBsum" id="6QI8"/>
<dbReference type="PDBsum" id="6QI9"/>
<dbReference type="PDBsum" id="7AHO"/>
<dbReference type="PDBsum" id="7OLE"/>
<dbReference type="PDBsum" id="7P6X"/>
<dbReference type="PDBsum" id="7ZI4"/>
<dbReference type="PDBsum" id="8QR1"/>
<dbReference type="PDBsum" id="8X15"/>
<dbReference type="PDBsum" id="8X19"/>
<dbReference type="PDBsum" id="8X1C"/>
<dbReference type="PDBsum" id="8XVG"/>
<dbReference type="PDBsum" id="8XVT"/>
<dbReference type="PDBsum" id="9C57"/>
<dbReference type="PDBsum" id="9C62"/>
<dbReference type="PDBsum" id="9EMA"/>
<dbReference type="PDBsum" id="9EMC"/>
<dbReference type="EMDB" id="EMD-11789"/>
<dbReference type="EMDB" id="EMD-12979"/>
<dbReference type="EMDB" id="EMD-13233"/>
<dbReference type="EMDB" id="EMD-14737"/>
<dbReference type="EMDB" id="EMD-18581"/>
<dbReference type="EMDB" id="EMD-18591"/>
<dbReference type="EMDB" id="EMD-18597"/>
<dbReference type="EMDB" id="EMD-18598"/>
<dbReference type="EMDB" id="EMD-18611"/>
<dbReference type="EMDB" id="EMD-18794"/>
<dbReference type="EMDB" id="EMD-19815"/>
<dbReference type="EMDB" id="EMD-19817"/>
<dbReference type="EMDB" id="EMD-3773"/>
<dbReference type="EMDB" id="EMD-37984"/>
<dbReference type="EMDB" id="EMD-37988"/>
<dbReference type="EMDB" id="EMD-37990"/>
<dbReference type="EMDB" id="EMD-38703"/>
<dbReference type="EMDB" id="EMD-38718"/>
<dbReference type="EMDB" id="EMD-3954"/>
<dbReference type="EMDB" id="EMD-4287"/>
<dbReference type="EMDB" id="EMD-4289"/>
<dbReference type="EMDB" id="EMD-4290"/>
<dbReference type="EMDB" id="EMD-4291"/>
<dbReference type="EMDB" id="EMD-45206"/>
<dbReference type="EMDB" id="EMD-45240"/>
<dbReference type="EMDB" id="EMD-4552"/>
<dbReference type="EMDB" id="EMD-4553"/>
<dbReference type="EMDB" id="EMD-4554"/>
<dbReference type="EMDB" id="EMD-4555"/>
<dbReference type="EMDB" id="EMD-4556"/>
<dbReference type="EMDB" id="EMD-4557"/>
<dbReference type="EMDB" id="EMD-9668"/>
<dbReference type="SASBDB" id="Q9Y230"/>
<dbReference type="SMR" id="Q9Y230"/>
<dbReference type="BioGRID" id="116067">
    <property type="interactions" value="645"/>
</dbReference>
<dbReference type="ComplexPortal" id="CPX-6143">
    <property type="entry name" value="R2TP core co-chaperone complex"/>
</dbReference>
<dbReference type="ComplexPortal" id="CPX-6150">
    <property type="entry name" value="R2SP co-chaperone complex"/>
</dbReference>
<dbReference type="ComplexPortal" id="CPX-6152">
    <property type="entry name" value="R2SD co-chaperone complex"/>
</dbReference>
<dbReference type="ComplexPortal" id="CPX-6153">
    <property type="entry name" value="R2T co-chaperone complex"/>
</dbReference>
<dbReference type="ComplexPortal" id="CPX-846">
    <property type="entry name" value="INO80 chromatin remodeling complex"/>
</dbReference>
<dbReference type="ComplexPortal" id="CPX-974">
    <property type="entry name" value="SRCAP chromatin remodeling complex"/>
</dbReference>
<dbReference type="ComplexPortal" id="CPX-978">
    <property type="entry name" value="NuA4 histone acetyltransferase complex"/>
</dbReference>
<dbReference type="CORUM" id="Q9Y230"/>
<dbReference type="DIP" id="DIP-28153N"/>
<dbReference type="FunCoup" id="Q9Y230">
    <property type="interactions" value="3047"/>
</dbReference>
<dbReference type="IntAct" id="Q9Y230">
    <property type="interactions" value="325"/>
</dbReference>
<dbReference type="MINT" id="Q9Y230"/>
<dbReference type="STRING" id="9606.ENSP00000473172"/>
<dbReference type="BindingDB" id="Q9Y230"/>
<dbReference type="ChEMBL" id="CHEMBL2062349"/>
<dbReference type="DrugBank" id="DB04216">
    <property type="generic name" value="Quercetin"/>
</dbReference>
<dbReference type="GlyGen" id="Q9Y230">
    <property type="glycosylation" value="2 sites, 1 O-linked glycan (2 sites)"/>
</dbReference>
<dbReference type="iPTMnet" id="Q9Y230"/>
<dbReference type="MetOSite" id="Q9Y230"/>
<dbReference type="PhosphoSitePlus" id="Q9Y230"/>
<dbReference type="SwissPalm" id="Q9Y230"/>
<dbReference type="BioMuta" id="RUVBL2"/>
<dbReference type="DMDM" id="28201890"/>
<dbReference type="REPRODUCTION-2DPAGE" id="IPI00009104"/>
<dbReference type="CPTAC" id="CPTAC-270"/>
<dbReference type="CPTAC" id="CPTAC-271"/>
<dbReference type="jPOST" id="Q9Y230"/>
<dbReference type="MassIVE" id="Q9Y230"/>
<dbReference type="PaxDb" id="9606-ENSP00000473172"/>
<dbReference type="PeptideAtlas" id="Q9Y230"/>
<dbReference type="ProteomicsDB" id="3549"/>
<dbReference type="ProteomicsDB" id="85619">
    <molecule id="Q9Y230-1"/>
</dbReference>
<dbReference type="Pumba" id="Q9Y230"/>
<dbReference type="Antibodypedia" id="3244">
    <property type="antibodies" value="430 antibodies from 36 providers"/>
</dbReference>
<dbReference type="DNASU" id="10856"/>
<dbReference type="Ensembl" id="ENST00000595090.6">
    <molecule id="Q9Y230-1"/>
    <property type="protein sequence ID" value="ENSP00000473172.1"/>
    <property type="gene ID" value="ENSG00000183207.15"/>
</dbReference>
<dbReference type="GeneID" id="10856"/>
<dbReference type="KEGG" id="hsa:10856"/>
<dbReference type="MANE-Select" id="ENST00000595090.6">
    <property type="protein sequence ID" value="ENSP00000473172.1"/>
    <property type="RefSeq nucleotide sequence ID" value="NM_006666.3"/>
    <property type="RefSeq protein sequence ID" value="NP_006657.1"/>
</dbReference>
<dbReference type="UCSC" id="uc002plr.2">
    <molecule id="Q9Y230-1"/>
    <property type="organism name" value="human"/>
</dbReference>
<dbReference type="AGR" id="HGNC:10475"/>
<dbReference type="CTD" id="10856"/>
<dbReference type="DisGeNET" id="10856"/>
<dbReference type="GeneCards" id="RUVBL2"/>
<dbReference type="HGNC" id="HGNC:10475">
    <property type="gene designation" value="RUVBL2"/>
</dbReference>
<dbReference type="HPA" id="ENSG00000183207">
    <property type="expression patterns" value="Low tissue specificity"/>
</dbReference>
<dbReference type="MalaCards" id="RUVBL2"/>
<dbReference type="MIM" id="604788">
    <property type="type" value="gene"/>
</dbReference>
<dbReference type="neXtProt" id="NX_Q9Y230"/>
<dbReference type="OpenTargets" id="ENSG00000183207"/>
<dbReference type="PharmGKB" id="PA34888"/>
<dbReference type="VEuPathDB" id="HostDB:ENSG00000183207"/>
<dbReference type="eggNOG" id="KOG2680">
    <property type="taxonomic scope" value="Eukaryota"/>
</dbReference>
<dbReference type="GeneTree" id="ENSGT00940000153556"/>
<dbReference type="HOGENOM" id="CLU_028311_4_0_1"/>
<dbReference type="InParanoid" id="Q9Y230"/>
<dbReference type="OMA" id="IINTEPY"/>
<dbReference type="OrthoDB" id="10060499at2759"/>
<dbReference type="PAN-GO" id="Q9Y230">
    <property type="GO annotations" value="9 GO annotations based on evolutionary models"/>
</dbReference>
<dbReference type="PhylomeDB" id="Q9Y230"/>
<dbReference type="TreeFam" id="TF300469"/>
<dbReference type="PathwayCommons" id="Q9Y230"/>
<dbReference type="Reactome" id="R-HSA-171319">
    <property type="pathway name" value="Telomere Extension By Telomerase"/>
</dbReference>
<dbReference type="Reactome" id="R-HSA-3214847">
    <property type="pathway name" value="HATs acetylate histones"/>
</dbReference>
<dbReference type="SignaLink" id="Q9Y230"/>
<dbReference type="SIGNOR" id="Q9Y230"/>
<dbReference type="BioGRID-ORCS" id="10856">
    <property type="hits" value="842 hits in 1140 CRISPR screens"/>
</dbReference>
<dbReference type="CD-CODE" id="6F24707C">
    <property type="entry name" value="Cajal body"/>
</dbReference>
<dbReference type="CD-CODE" id="804901D1">
    <property type="entry name" value="Nuclear speckle"/>
</dbReference>
<dbReference type="CD-CODE" id="8C2F96ED">
    <property type="entry name" value="Centrosome"/>
</dbReference>
<dbReference type="CD-CODE" id="91857CE7">
    <property type="entry name" value="Nucleolus"/>
</dbReference>
<dbReference type="ChiTaRS" id="RUVBL2">
    <property type="organism name" value="human"/>
</dbReference>
<dbReference type="EvolutionaryTrace" id="Q9Y230"/>
<dbReference type="GeneWiki" id="RUVBL2"/>
<dbReference type="GenomeRNAi" id="10856"/>
<dbReference type="Pharos" id="Q9Y230">
    <property type="development level" value="Tbio"/>
</dbReference>
<dbReference type="PRO" id="PR:Q9Y230"/>
<dbReference type="Proteomes" id="UP000005640">
    <property type="component" value="Chromosome 19"/>
</dbReference>
<dbReference type="RNAct" id="Q9Y230">
    <property type="molecule type" value="protein"/>
</dbReference>
<dbReference type="Bgee" id="ENSG00000183207">
    <property type="expression patterns" value="Expressed in left testis and 202 other cell types or tissues"/>
</dbReference>
<dbReference type="ExpressionAtlas" id="Q9Y230">
    <property type="expression patterns" value="baseline and differential"/>
</dbReference>
<dbReference type="GO" id="GO:0005813">
    <property type="term" value="C:centrosome"/>
    <property type="evidence" value="ECO:0000314"/>
    <property type="project" value="HPA"/>
</dbReference>
<dbReference type="GO" id="GO:0036064">
    <property type="term" value="C:ciliary basal body"/>
    <property type="evidence" value="ECO:0000314"/>
    <property type="project" value="HPA"/>
</dbReference>
<dbReference type="GO" id="GO:0005737">
    <property type="term" value="C:cytoplasm"/>
    <property type="evidence" value="ECO:0000314"/>
    <property type="project" value="UniProtKB"/>
</dbReference>
<dbReference type="GO" id="GO:0005829">
    <property type="term" value="C:cytosol"/>
    <property type="evidence" value="ECO:0000314"/>
    <property type="project" value="HPA"/>
</dbReference>
<dbReference type="GO" id="GO:0120293">
    <property type="term" value="C:dynein axonemal particle"/>
    <property type="evidence" value="ECO:0000250"/>
    <property type="project" value="UniProtKB"/>
</dbReference>
<dbReference type="GO" id="GO:0000791">
    <property type="term" value="C:euchromatin"/>
    <property type="evidence" value="ECO:0000314"/>
    <property type="project" value="UniProtKB"/>
</dbReference>
<dbReference type="GO" id="GO:0070062">
    <property type="term" value="C:extracellular exosome"/>
    <property type="evidence" value="ECO:0007005"/>
    <property type="project" value="UniProtKB"/>
</dbReference>
<dbReference type="GO" id="GO:0031011">
    <property type="term" value="C:Ino80 complex"/>
    <property type="evidence" value="ECO:0000314"/>
    <property type="project" value="UniProtKB"/>
</dbReference>
<dbReference type="GO" id="GO:0016020">
    <property type="term" value="C:membrane"/>
    <property type="evidence" value="ECO:0007669"/>
    <property type="project" value="UniProtKB-SubCell"/>
</dbReference>
<dbReference type="GO" id="GO:0071339">
    <property type="term" value="C:MLL1 complex"/>
    <property type="evidence" value="ECO:0000314"/>
    <property type="project" value="UniProtKB"/>
</dbReference>
<dbReference type="GO" id="GO:0035267">
    <property type="term" value="C:NuA4 histone acetyltransferase complex"/>
    <property type="evidence" value="ECO:0000314"/>
    <property type="project" value="UniProtKB"/>
</dbReference>
<dbReference type="GO" id="GO:0016363">
    <property type="term" value="C:nuclear matrix"/>
    <property type="evidence" value="ECO:0007669"/>
    <property type="project" value="UniProtKB-SubCell"/>
</dbReference>
<dbReference type="GO" id="GO:0005654">
    <property type="term" value="C:nucleoplasm"/>
    <property type="evidence" value="ECO:0000314"/>
    <property type="project" value="HPA"/>
</dbReference>
<dbReference type="GO" id="GO:0000786">
    <property type="term" value="C:nucleosome"/>
    <property type="evidence" value="ECO:0000314"/>
    <property type="project" value="ComplexPortal"/>
</dbReference>
<dbReference type="GO" id="GO:0005634">
    <property type="term" value="C:nucleus"/>
    <property type="evidence" value="ECO:0000314"/>
    <property type="project" value="UniProtKB"/>
</dbReference>
<dbReference type="GO" id="GO:0101031">
    <property type="term" value="C:protein folding chaperone complex"/>
    <property type="evidence" value="ECO:0000353"/>
    <property type="project" value="ComplexPortal"/>
</dbReference>
<dbReference type="GO" id="GO:0097255">
    <property type="term" value="C:R2TP complex"/>
    <property type="evidence" value="ECO:0000314"/>
    <property type="project" value="UniProtKB"/>
</dbReference>
<dbReference type="GO" id="GO:1990904">
    <property type="term" value="C:ribonucleoprotein complex"/>
    <property type="evidence" value="ECO:0007669"/>
    <property type="project" value="Ensembl"/>
</dbReference>
<dbReference type="GO" id="GO:1990062">
    <property type="term" value="C:RPAP3/R2TP/prefoldin-like complex"/>
    <property type="evidence" value="ECO:0000353"/>
    <property type="project" value="ComplexPortal"/>
</dbReference>
<dbReference type="GO" id="GO:0000812">
    <property type="term" value="C:Swr1 complex"/>
    <property type="evidence" value="ECO:0000314"/>
    <property type="project" value="UniProtKB"/>
</dbReference>
<dbReference type="GO" id="GO:0043531">
    <property type="term" value="F:ADP binding"/>
    <property type="evidence" value="ECO:0007669"/>
    <property type="project" value="Ensembl"/>
</dbReference>
<dbReference type="GO" id="GO:0005524">
    <property type="term" value="F:ATP binding"/>
    <property type="evidence" value="ECO:0007669"/>
    <property type="project" value="UniProtKB-KW"/>
</dbReference>
<dbReference type="GO" id="GO:0016887">
    <property type="term" value="F:ATP hydrolysis activity"/>
    <property type="evidence" value="ECO:0000314"/>
    <property type="project" value="UniProtKB"/>
</dbReference>
<dbReference type="GO" id="GO:0051117">
    <property type="term" value="F:ATPase binding"/>
    <property type="evidence" value="ECO:0007669"/>
    <property type="project" value="Ensembl"/>
</dbReference>
<dbReference type="GO" id="GO:0008013">
    <property type="term" value="F:beta-catenin binding"/>
    <property type="evidence" value="ECO:0000314"/>
    <property type="project" value="UniProtKB"/>
</dbReference>
<dbReference type="GO" id="GO:0031490">
    <property type="term" value="F:chromatin DNA binding"/>
    <property type="evidence" value="ECO:0000314"/>
    <property type="project" value="UniProtKB"/>
</dbReference>
<dbReference type="GO" id="GO:0003678">
    <property type="term" value="F:DNA helicase activity"/>
    <property type="evidence" value="ECO:0000314"/>
    <property type="project" value="UniProtKB"/>
</dbReference>
<dbReference type="GO" id="GO:0042802">
    <property type="term" value="F:identical protein binding"/>
    <property type="evidence" value="ECO:0000314"/>
    <property type="project" value="UniProtKB"/>
</dbReference>
<dbReference type="GO" id="GO:0140585">
    <property type="term" value="F:promoter-enhancer loop anchoring activity"/>
    <property type="evidence" value="ECO:0000315"/>
    <property type="project" value="GO_Central"/>
</dbReference>
<dbReference type="GO" id="GO:0042803">
    <property type="term" value="F:protein homodimerization activity"/>
    <property type="evidence" value="ECO:0007669"/>
    <property type="project" value="Ensembl"/>
</dbReference>
<dbReference type="GO" id="GO:0000978">
    <property type="term" value="F:RNA polymerase II cis-regulatory region sequence-specific DNA binding"/>
    <property type="evidence" value="ECO:0000314"/>
    <property type="project" value="UniProtKB"/>
</dbReference>
<dbReference type="GO" id="GO:0000979">
    <property type="term" value="F:RNA polymerase II core promoter sequence-specific DNA binding"/>
    <property type="evidence" value="ECO:0000314"/>
    <property type="project" value="UniProtKB"/>
</dbReference>
<dbReference type="GO" id="GO:0017025">
    <property type="term" value="F:TBP-class protein binding"/>
    <property type="evidence" value="ECO:0000314"/>
    <property type="project" value="UniProtKB"/>
</dbReference>
<dbReference type="GO" id="GO:0001094">
    <property type="term" value="F:TFIID-class transcription factor complex binding"/>
    <property type="evidence" value="ECO:0007669"/>
    <property type="project" value="Ensembl"/>
</dbReference>
<dbReference type="GO" id="GO:0003714">
    <property type="term" value="F:transcription corepressor activity"/>
    <property type="evidence" value="ECO:0000314"/>
    <property type="project" value="UniProtKB"/>
</dbReference>
<dbReference type="GO" id="GO:0051082">
    <property type="term" value="F:unfolded protein binding"/>
    <property type="evidence" value="ECO:0000304"/>
    <property type="project" value="ProtInc"/>
</dbReference>
<dbReference type="GO" id="GO:0000492">
    <property type="term" value="P:box C/D snoRNP assembly"/>
    <property type="evidence" value="ECO:0000318"/>
    <property type="project" value="GO_Central"/>
</dbReference>
<dbReference type="GO" id="GO:0071392">
    <property type="term" value="P:cellular response to estradiol stimulus"/>
    <property type="evidence" value="ECO:0000315"/>
    <property type="project" value="UniProtKB"/>
</dbReference>
<dbReference type="GO" id="GO:0034644">
    <property type="term" value="P:cellular response to UV"/>
    <property type="evidence" value="ECO:0000315"/>
    <property type="project" value="UniProtKB"/>
</dbReference>
<dbReference type="GO" id="GO:0006338">
    <property type="term" value="P:chromatin remodeling"/>
    <property type="evidence" value="ECO:0000314"/>
    <property type="project" value="ComplexPortal"/>
</dbReference>
<dbReference type="GO" id="GO:0006310">
    <property type="term" value="P:DNA recombination"/>
    <property type="evidence" value="ECO:0000304"/>
    <property type="project" value="ProtInc"/>
</dbReference>
<dbReference type="GO" id="GO:0006281">
    <property type="term" value="P:DNA repair"/>
    <property type="evidence" value="ECO:0000304"/>
    <property type="project" value="ProtInc"/>
</dbReference>
<dbReference type="GO" id="GO:0071169">
    <property type="term" value="P:establishment of protein localization to chromatin"/>
    <property type="evidence" value="ECO:0000315"/>
    <property type="project" value="UniProtKB"/>
</dbReference>
<dbReference type="GO" id="GO:0090090">
    <property type="term" value="P:negative regulation of canonical Wnt signaling pathway"/>
    <property type="evidence" value="ECO:0000314"/>
    <property type="project" value="UniProtKB"/>
</dbReference>
<dbReference type="GO" id="GO:0045739">
    <property type="term" value="P:positive regulation of DNA repair"/>
    <property type="evidence" value="ECO:0000266"/>
    <property type="project" value="ComplexPortal"/>
</dbReference>
<dbReference type="GO" id="GO:0045893">
    <property type="term" value="P:positive regulation of DNA-templated transcription"/>
    <property type="evidence" value="ECO:0000315"/>
    <property type="project" value="ComplexPortal"/>
</dbReference>
<dbReference type="GO" id="GO:1905168">
    <property type="term" value="P:positive regulation of double-strand break repair via homologous recombination"/>
    <property type="evidence" value="ECO:0000314"/>
    <property type="project" value="ComplexPortal"/>
</dbReference>
<dbReference type="GO" id="GO:1904507">
    <property type="term" value="P:positive regulation of telomere maintenance in response to DNA damage"/>
    <property type="evidence" value="ECO:0000266"/>
    <property type="project" value="ComplexPortal"/>
</dbReference>
<dbReference type="GO" id="GO:0045944">
    <property type="term" value="P:positive regulation of transcription by RNA polymerase II"/>
    <property type="evidence" value="ECO:0000315"/>
    <property type="project" value="UniProtKB"/>
</dbReference>
<dbReference type="GO" id="GO:0006457">
    <property type="term" value="P:protein folding"/>
    <property type="evidence" value="ECO:0000304"/>
    <property type="project" value="ProtInc"/>
</dbReference>
<dbReference type="GO" id="GO:0050821">
    <property type="term" value="P:protein stabilization"/>
    <property type="evidence" value="ECO:0000303"/>
    <property type="project" value="ComplexPortal"/>
</dbReference>
<dbReference type="GO" id="GO:0042981">
    <property type="term" value="P:regulation of apoptotic process"/>
    <property type="evidence" value="ECO:0000303"/>
    <property type="project" value="ComplexPortal"/>
</dbReference>
<dbReference type="GO" id="GO:0051726">
    <property type="term" value="P:regulation of cell cycle"/>
    <property type="evidence" value="ECO:0000315"/>
    <property type="project" value="ComplexPortal"/>
</dbReference>
<dbReference type="GO" id="GO:0033044">
    <property type="term" value="P:regulation of chromosome organization"/>
    <property type="evidence" value="ECO:0000315"/>
    <property type="project" value="ComplexPortal"/>
</dbReference>
<dbReference type="GO" id="GO:0006282">
    <property type="term" value="P:regulation of DNA repair"/>
    <property type="evidence" value="ECO:0000266"/>
    <property type="project" value="ComplexPortal"/>
</dbReference>
<dbReference type="GO" id="GO:0006275">
    <property type="term" value="P:regulation of DNA replication"/>
    <property type="evidence" value="ECO:0000315"/>
    <property type="project" value="ComplexPortal"/>
</dbReference>
<dbReference type="GO" id="GO:0060382">
    <property type="term" value="P:regulation of DNA strand elongation"/>
    <property type="evidence" value="ECO:0000315"/>
    <property type="project" value="ComplexPortal"/>
</dbReference>
<dbReference type="GO" id="GO:0006355">
    <property type="term" value="P:regulation of DNA-templated transcription"/>
    <property type="evidence" value="ECO:0000303"/>
    <property type="project" value="ComplexPortal"/>
</dbReference>
<dbReference type="GO" id="GO:2000779">
    <property type="term" value="P:regulation of double-strand break repair"/>
    <property type="evidence" value="ECO:0000303"/>
    <property type="project" value="ComplexPortal"/>
</dbReference>
<dbReference type="GO" id="GO:0045995">
    <property type="term" value="P:regulation of embryonic development"/>
    <property type="evidence" value="ECO:0000266"/>
    <property type="project" value="ComplexPortal"/>
</dbReference>
<dbReference type="GO" id="GO:0006357">
    <property type="term" value="P:regulation of transcription by RNA polymerase II"/>
    <property type="evidence" value="ECO:0000318"/>
    <property type="project" value="GO_Central"/>
</dbReference>
<dbReference type="GO" id="GO:0090671">
    <property type="term" value="P:telomerase RNA localization to Cajal body"/>
    <property type="evidence" value="ECO:0007001"/>
    <property type="project" value="BHF-UCL"/>
</dbReference>
<dbReference type="GO" id="GO:0000723">
    <property type="term" value="P:telomere maintenance"/>
    <property type="evidence" value="ECO:0000266"/>
    <property type="project" value="ComplexPortal"/>
</dbReference>
<dbReference type="FunFam" id="3.40.50.300:FF:002221">
    <property type="entry name" value="RuvB-like 2"/>
    <property type="match status" value="2"/>
</dbReference>
<dbReference type="FunFam" id="1.10.8.60:FF:000010">
    <property type="entry name" value="RuvB-like helicase"/>
    <property type="match status" value="1"/>
</dbReference>
<dbReference type="FunFam" id="2.40.50.360:FF:000002">
    <property type="entry name" value="RuvB-like helicase"/>
    <property type="match status" value="1"/>
</dbReference>
<dbReference type="Gene3D" id="1.10.8.60">
    <property type="match status" value="1"/>
</dbReference>
<dbReference type="Gene3D" id="3.40.50.300">
    <property type="entry name" value="P-loop containing nucleotide triphosphate hydrolases"/>
    <property type="match status" value="1"/>
</dbReference>
<dbReference type="Gene3D" id="2.40.50.360">
    <property type="entry name" value="RuvB-like helicase, domain II"/>
    <property type="match status" value="1"/>
</dbReference>
<dbReference type="InterPro" id="IPR003593">
    <property type="entry name" value="AAA+_ATPase"/>
</dbReference>
<dbReference type="InterPro" id="IPR027417">
    <property type="entry name" value="P-loop_NTPase"/>
</dbReference>
<dbReference type="InterPro" id="IPR027238">
    <property type="entry name" value="RuvB-like"/>
</dbReference>
<dbReference type="InterPro" id="IPR041048">
    <property type="entry name" value="RuvB-like_C"/>
</dbReference>
<dbReference type="InterPro" id="IPR042487">
    <property type="entry name" value="RuvBL1/2_DNA/RNA_bd_dom"/>
</dbReference>
<dbReference type="InterPro" id="IPR010339">
    <property type="entry name" value="TIP49_P-loop"/>
</dbReference>
<dbReference type="PANTHER" id="PTHR11093">
    <property type="entry name" value="RUVB-RELATED REPTIN AND PONTIN"/>
    <property type="match status" value="1"/>
</dbReference>
<dbReference type="Pfam" id="PF06068">
    <property type="entry name" value="TIP49"/>
    <property type="match status" value="1"/>
</dbReference>
<dbReference type="Pfam" id="PF17856">
    <property type="entry name" value="TIP49_C"/>
    <property type="match status" value="1"/>
</dbReference>
<dbReference type="PRINTS" id="PR01874">
    <property type="entry name" value="DNAREPAIRADA"/>
</dbReference>
<dbReference type="SMART" id="SM00382">
    <property type="entry name" value="AAA"/>
    <property type="match status" value="1"/>
</dbReference>
<dbReference type="SUPFAM" id="SSF52540">
    <property type="entry name" value="P-loop containing nucleoside triphosphate hydrolases"/>
    <property type="match status" value="1"/>
</dbReference>
<reference key="1">
    <citation type="journal article" date="1999" name="Biochim. Biophys. Acta">
        <title>Isolation, molecular characterization, and tissue-specific expression of ECP-51 and ECP-54 (TIP49), two homologous, interacting erythroid cytosolic proteins.</title>
        <authorList>
            <person name="Salzer U."/>
            <person name="Kubicek M."/>
            <person name="Prohaska R."/>
        </authorList>
    </citation>
    <scope>NUCLEOTIDE SEQUENCE [MRNA] (ISOFORM 1)</scope>
    <scope>PROTEIN SEQUENCE OF 72-83; 131-144; 212-223; 369-372 AND 440-457</scope>
    <source>
        <tissue>Bone marrow</tissue>
    </source>
</reference>
<reference key="2">
    <citation type="journal article" date="1999" name="J. Biol. Chem.">
        <title>TIP49b, a new RuvB-like DNA helicase, is included in a complex together with another RuvB-like DNA helicase, TIP49a.</title>
        <authorList>
            <person name="Kanemaki M."/>
            <person name="Kurokawa Y."/>
            <person name="Matsu-ura T."/>
            <person name="Makino Y."/>
            <person name="Masani A."/>
            <person name="Okazaki K."/>
            <person name="Morishita T."/>
            <person name="Tamura T.-A."/>
        </authorList>
    </citation>
    <scope>NUCLEOTIDE SEQUENCE [MRNA] (ISOFORM 1)</scope>
    <scope>INTERACTION WITH RUVBL1</scope>
    <scope>FUNCTION</scope>
    <scope>CATALYTIC ACTIVITY</scope>
    <scope>TISSUE SPECIFICITY</scope>
    <source>
        <tissue>Liver</tissue>
    </source>
</reference>
<reference key="3">
    <citation type="journal article" date="2000" name="Ann. Genet.">
        <title>Human TIP49b/RUVBL2 gene: genomic structure, expression pattern, physical link to the human CGB/LHB gene cluster on chromosome 19q13.3.</title>
        <authorList>
            <person name="Parfait B."/>
            <person name="Giovangrandi Y."/>
            <person name="Asheuer M."/>
            <person name="Laurendeau I."/>
            <person name="Olivi M."/>
            <person name="Vodovar N."/>
            <person name="Vidaud D."/>
            <person name="Vidaud M."/>
            <person name="Bieche I."/>
        </authorList>
    </citation>
    <scope>NUCLEOTIDE SEQUENCE [MRNA] (ISOFORM 1)</scope>
    <source>
        <tissue>Mammary gland</tissue>
    </source>
</reference>
<reference key="4">
    <citation type="journal article" date="2000" name="EMBO J.">
        <title>Pontin52 and reptin52 function as antagonistic regulators of beta-catenin signalling activity.</title>
        <authorList>
            <person name="Bauer A."/>
            <person name="Chauvet S."/>
            <person name="Huber O."/>
            <person name="Usseglio F."/>
            <person name="Rothbaecher U."/>
            <person name="Aragnol D."/>
            <person name="Kemler R."/>
            <person name="Pradel J."/>
        </authorList>
    </citation>
    <scope>NUCLEOTIDE SEQUENCE [MRNA] (ISOFORM 1)</scope>
    <source>
        <tissue>Fetal liver</tissue>
    </source>
</reference>
<reference key="5">
    <citation type="journal article" date="2000" name="Mol. Cell">
        <title>An ATPase/helicase complex is an essential cofactor for oncogenic transformation by c-Myc.</title>
        <authorList>
            <person name="Wood M.A."/>
            <person name="McMahon S.B."/>
            <person name="Cole M.D."/>
        </authorList>
    </citation>
    <scope>NUCLEOTIDE SEQUENCE [MRNA] (ISOFORM 1)</scope>
    <scope>PROTEIN SEQUENCE OF 73-83; 116-124; 237-253 AND 254-269</scope>
    <scope>INTERACTION WITH MYC</scope>
    <scope>FUNCTION</scope>
</reference>
<reference key="6">
    <citation type="journal article" date="2000" name="Genome Res.">
        <title>Identification of novel human genes evolutionarily conserved in Caenorhabditis elegans by comparative proteomics.</title>
        <authorList>
            <person name="Lai C.-H."/>
            <person name="Chou C.-Y."/>
            <person name="Ch'ang L.-Y."/>
            <person name="Liu C.-S."/>
            <person name="Lin W.-C."/>
        </authorList>
    </citation>
    <scope>NUCLEOTIDE SEQUENCE [LARGE SCALE MRNA] (ISOFORM 1)</scope>
</reference>
<reference key="7">
    <citation type="journal article" date="2001" name="Genome Res.">
        <title>Towards a catalog of human genes and proteins: sequencing and analysis of 500 novel complete protein coding human cDNAs.</title>
        <authorList>
            <person name="Wiemann S."/>
            <person name="Weil B."/>
            <person name="Wellenreuther R."/>
            <person name="Gassenhuber J."/>
            <person name="Glassl S."/>
            <person name="Ansorge W."/>
            <person name="Boecher M."/>
            <person name="Bloecker H."/>
            <person name="Bauersachs S."/>
            <person name="Blum H."/>
            <person name="Lauber J."/>
            <person name="Duesterhoeft A."/>
            <person name="Beyer A."/>
            <person name="Koehrer K."/>
            <person name="Strack N."/>
            <person name="Mewes H.-W."/>
            <person name="Ottenwaelder B."/>
            <person name="Obermaier B."/>
            <person name="Tampe J."/>
            <person name="Heubner D."/>
            <person name="Wambutt R."/>
            <person name="Korn B."/>
            <person name="Klein M."/>
            <person name="Poustka A."/>
        </authorList>
    </citation>
    <scope>NUCLEOTIDE SEQUENCE [LARGE SCALE MRNA] (ISOFORM 1)</scope>
    <source>
        <tissue>Testis</tissue>
    </source>
</reference>
<reference key="8">
    <citation type="journal article" date="2004" name="Nat. Genet.">
        <title>Complete sequencing and characterization of 21,243 full-length human cDNAs.</title>
        <authorList>
            <person name="Ota T."/>
            <person name="Suzuki Y."/>
            <person name="Nishikawa T."/>
            <person name="Otsuki T."/>
            <person name="Sugiyama T."/>
            <person name="Irie R."/>
            <person name="Wakamatsu A."/>
            <person name="Hayashi K."/>
            <person name="Sato H."/>
            <person name="Nagai K."/>
            <person name="Kimura K."/>
            <person name="Makita H."/>
            <person name="Sekine M."/>
            <person name="Obayashi M."/>
            <person name="Nishi T."/>
            <person name="Shibahara T."/>
            <person name="Tanaka T."/>
            <person name="Ishii S."/>
            <person name="Yamamoto J."/>
            <person name="Saito K."/>
            <person name="Kawai Y."/>
            <person name="Isono Y."/>
            <person name="Nakamura Y."/>
            <person name="Nagahari K."/>
            <person name="Murakami K."/>
            <person name="Yasuda T."/>
            <person name="Iwayanagi T."/>
            <person name="Wagatsuma M."/>
            <person name="Shiratori A."/>
            <person name="Sudo H."/>
            <person name="Hosoiri T."/>
            <person name="Kaku Y."/>
            <person name="Kodaira H."/>
            <person name="Kondo H."/>
            <person name="Sugawara M."/>
            <person name="Takahashi M."/>
            <person name="Kanda K."/>
            <person name="Yokoi T."/>
            <person name="Furuya T."/>
            <person name="Kikkawa E."/>
            <person name="Omura Y."/>
            <person name="Abe K."/>
            <person name="Kamihara K."/>
            <person name="Katsuta N."/>
            <person name="Sato K."/>
            <person name="Tanikawa M."/>
            <person name="Yamazaki M."/>
            <person name="Ninomiya K."/>
            <person name="Ishibashi T."/>
            <person name="Yamashita H."/>
            <person name="Murakawa K."/>
            <person name="Fujimori K."/>
            <person name="Tanai H."/>
            <person name="Kimata M."/>
            <person name="Watanabe M."/>
            <person name="Hiraoka S."/>
            <person name="Chiba Y."/>
            <person name="Ishida S."/>
            <person name="Ono Y."/>
            <person name="Takiguchi S."/>
            <person name="Watanabe S."/>
            <person name="Yosida M."/>
            <person name="Hotuta T."/>
            <person name="Kusano J."/>
            <person name="Kanehori K."/>
            <person name="Takahashi-Fujii A."/>
            <person name="Hara H."/>
            <person name="Tanase T.-O."/>
            <person name="Nomura Y."/>
            <person name="Togiya S."/>
            <person name="Komai F."/>
            <person name="Hara R."/>
            <person name="Takeuchi K."/>
            <person name="Arita M."/>
            <person name="Imose N."/>
            <person name="Musashino K."/>
            <person name="Yuuki H."/>
            <person name="Oshima A."/>
            <person name="Sasaki N."/>
            <person name="Aotsuka S."/>
            <person name="Yoshikawa Y."/>
            <person name="Matsunawa H."/>
            <person name="Ichihara T."/>
            <person name="Shiohata N."/>
            <person name="Sano S."/>
            <person name="Moriya S."/>
            <person name="Momiyama H."/>
            <person name="Satoh N."/>
            <person name="Takami S."/>
            <person name="Terashima Y."/>
            <person name="Suzuki O."/>
            <person name="Nakagawa S."/>
            <person name="Senoh A."/>
            <person name="Mizoguchi H."/>
            <person name="Goto Y."/>
            <person name="Shimizu F."/>
            <person name="Wakebe H."/>
            <person name="Hishigaki H."/>
            <person name="Watanabe T."/>
            <person name="Sugiyama A."/>
            <person name="Takemoto M."/>
            <person name="Kawakami B."/>
            <person name="Yamazaki M."/>
            <person name="Watanabe K."/>
            <person name="Kumagai A."/>
            <person name="Itakura S."/>
            <person name="Fukuzumi Y."/>
            <person name="Fujimori Y."/>
            <person name="Komiyama M."/>
            <person name="Tashiro H."/>
            <person name="Tanigami A."/>
            <person name="Fujiwara T."/>
            <person name="Ono T."/>
            <person name="Yamada K."/>
            <person name="Fujii Y."/>
            <person name="Ozaki K."/>
            <person name="Hirao M."/>
            <person name="Ohmori Y."/>
            <person name="Kawabata A."/>
            <person name="Hikiji T."/>
            <person name="Kobatake N."/>
            <person name="Inagaki H."/>
            <person name="Ikema Y."/>
            <person name="Okamoto S."/>
            <person name="Okitani R."/>
            <person name="Kawakami T."/>
            <person name="Noguchi S."/>
            <person name="Itoh T."/>
            <person name="Shigeta K."/>
            <person name="Senba T."/>
            <person name="Matsumura K."/>
            <person name="Nakajima Y."/>
            <person name="Mizuno T."/>
            <person name="Morinaga M."/>
            <person name="Sasaki M."/>
            <person name="Togashi T."/>
            <person name="Oyama M."/>
            <person name="Hata H."/>
            <person name="Watanabe M."/>
            <person name="Komatsu T."/>
            <person name="Mizushima-Sugano J."/>
            <person name="Satoh T."/>
            <person name="Shirai Y."/>
            <person name="Takahashi Y."/>
            <person name="Nakagawa K."/>
            <person name="Okumura K."/>
            <person name="Nagase T."/>
            <person name="Nomura N."/>
            <person name="Kikuchi H."/>
            <person name="Masuho Y."/>
            <person name="Yamashita R."/>
            <person name="Nakai K."/>
            <person name="Yada T."/>
            <person name="Nakamura Y."/>
            <person name="Ohara O."/>
            <person name="Isogai T."/>
            <person name="Sugano S."/>
        </authorList>
    </citation>
    <scope>NUCLEOTIDE SEQUENCE [LARGE SCALE MRNA] (ISOFORMS 1 AND 2)</scope>
    <source>
        <tissue>Embryo</tissue>
        <tissue>Testis</tissue>
    </source>
</reference>
<reference key="9">
    <citation type="submission" date="2004-06" db="EMBL/GenBank/DDBJ databases">
        <title>Cloning of human full open reading frames in Gateway(TM) system entry vector (pDONR201).</title>
        <authorList>
            <person name="Ebert L."/>
            <person name="Schick M."/>
            <person name="Neubert P."/>
            <person name="Schatten R."/>
            <person name="Henze S."/>
            <person name="Korn B."/>
        </authorList>
    </citation>
    <scope>NUCLEOTIDE SEQUENCE [LARGE SCALE MRNA] (ISOFORM 1)</scope>
</reference>
<reference key="10">
    <citation type="journal article" date="2004" name="Nature">
        <title>The DNA sequence and biology of human chromosome 19.</title>
        <authorList>
            <person name="Grimwood J."/>
            <person name="Gordon L.A."/>
            <person name="Olsen A.S."/>
            <person name="Terry A."/>
            <person name="Schmutz J."/>
            <person name="Lamerdin J.E."/>
            <person name="Hellsten U."/>
            <person name="Goodstein D."/>
            <person name="Couronne O."/>
            <person name="Tran-Gyamfi M."/>
            <person name="Aerts A."/>
            <person name="Altherr M."/>
            <person name="Ashworth L."/>
            <person name="Bajorek E."/>
            <person name="Black S."/>
            <person name="Branscomb E."/>
            <person name="Caenepeel S."/>
            <person name="Carrano A.V."/>
            <person name="Caoile C."/>
            <person name="Chan Y.M."/>
            <person name="Christensen M."/>
            <person name="Cleland C.A."/>
            <person name="Copeland A."/>
            <person name="Dalin E."/>
            <person name="Dehal P."/>
            <person name="Denys M."/>
            <person name="Detter J.C."/>
            <person name="Escobar J."/>
            <person name="Flowers D."/>
            <person name="Fotopulos D."/>
            <person name="Garcia C."/>
            <person name="Georgescu A.M."/>
            <person name="Glavina T."/>
            <person name="Gomez M."/>
            <person name="Gonzales E."/>
            <person name="Groza M."/>
            <person name="Hammon N."/>
            <person name="Hawkins T."/>
            <person name="Haydu L."/>
            <person name="Ho I."/>
            <person name="Huang W."/>
            <person name="Israni S."/>
            <person name="Jett J."/>
            <person name="Kadner K."/>
            <person name="Kimball H."/>
            <person name="Kobayashi A."/>
            <person name="Larionov V."/>
            <person name="Leem S.-H."/>
            <person name="Lopez F."/>
            <person name="Lou Y."/>
            <person name="Lowry S."/>
            <person name="Malfatti S."/>
            <person name="Martinez D."/>
            <person name="McCready P.M."/>
            <person name="Medina C."/>
            <person name="Morgan J."/>
            <person name="Nelson K."/>
            <person name="Nolan M."/>
            <person name="Ovcharenko I."/>
            <person name="Pitluck S."/>
            <person name="Pollard M."/>
            <person name="Popkie A.P."/>
            <person name="Predki P."/>
            <person name="Quan G."/>
            <person name="Ramirez L."/>
            <person name="Rash S."/>
            <person name="Retterer J."/>
            <person name="Rodriguez A."/>
            <person name="Rogers S."/>
            <person name="Salamov A."/>
            <person name="Salazar A."/>
            <person name="She X."/>
            <person name="Smith D."/>
            <person name="Slezak T."/>
            <person name="Solovyev V."/>
            <person name="Thayer N."/>
            <person name="Tice H."/>
            <person name="Tsai M."/>
            <person name="Ustaszewska A."/>
            <person name="Vo N."/>
            <person name="Wagner M."/>
            <person name="Wheeler J."/>
            <person name="Wu K."/>
            <person name="Xie G."/>
            <person name="Yang J."/>
            <person name="Dubchak I."/>
            <person name="Furey T.S."/>
            <person name="DeJong P."/>
            <person name="Dickson M."/>
            <person name="Gordon D."/>
            <person name="Eichler E.E."/>
            <person name="Pennacchio L.A."/>
            <person name="Richardson P."/>
            <person name="Stubbs L."/>
            <person name="Rokhsar D.S."/>
            <person name="Myers R.M."/>
            <person name="Rubin E.M."/>
            <person name="Lucas S.M."/>
        </authorList>
    </citation>
    <scope>NUCLEOTIDE SEQUENCE [LARGE SCALE GENOMIC DNA]</scope>
</reference>
<reference key="11">
    <citation type="submission" date="2005-07" db="EMBL/GenBank/DDBJ databases">
        <authorList>
            <person name="Mural R.J."/>
            <person name="Istrail S."/>
            <person name="Sutton G."/>
            <person name="Florea L."/>
            <person name="Halpern A.L."/>
            <person name="Mobarry C.M."/>
            <person name="Lippert R."/>
            <person name="Walenz B."/>
            <person name="Shatkay H."/>
            <person name="Dew I."/>
            <person name="Miller J.R."/>
            <person name="Flanigan M.J."/>
            <person name="Edwards N.J."/>
            <person name="Bolanos R."/>
            <person name="Fasulo D."/>
            <person name="Halldorsson B.V."/>
            <person name="Hannenhalli S."/>
            <person name="Turner R."/>
            <person name="Yooseph S."/>
            <person name="Lu F."/>
            <person name="Nusskern D.R."/>
            <person name="Shue B.C."/>
            <person name="Zheng X.H."/>
            <person name="Zhong F."/>
            <person name="Delcher A.L."/>
            <person name="Huson D.H."/>
            <person name="Kravitz S.A."/>
            <person name="Mouchard L."/>
            <person name="Reinert K."/>
            <person name="Remington K.A."/>
            <person name="Clark A.G."/>
            <person name="Waterman M.S."/>
            <person name="Eichler E.E."/>
            <person name="Adams M.D."/>
            <person name="Hunkapiller M.W."/>
            <person name="Myers E.W."/>
            <person name="Venter J.C."/>
        </authorList>
    </citation>
    <scope>NUCLEOTIDE SEQUENCE [LARGE SCALE GENOMIC DNA]</scope>
</reference>
<reference key="12">
    <citation type="journal article" date="2004" name="Genome Res.">
        <title>The status, quality, and expansion of the NIH full-length cDNA project: the Mammalian Gene Collection (MGC).</title>
        <authorList>
            <consortium name="The MGC Project Team"/>
        </authorList>
    </citation>
    <scope>NUCLEOTIDE SEQUENCE [LARGE SCALE MRNA] (ISOFORM 1)</scope>
    <source>
        <tissue>Colon</tissue>
        <tissue>Lung</tissue>
    </source>
</reference>
<reference key="13">
    <citation type="journal article" date="2003" name="Nat. Biotechnol.">
        <title>Exploring proteomes and analyzing protein processing by mass spectrometric identification of sorted N-terminal peptides.</title>
        <authorList>
            <person name="Gevaert K."/>
            <person name="Goethals M."/>
            <person name="Martens L."/>
            <person name="Van Damme J."/>
            <person name="Staes A."/>
            <person name="Thomas G.R."/>
            <person name="Vandekerckhove J."/>
        </authorList>
    </citation>
    <scope>PROTEIN SEQUENCE OF 2-14</scope>
    <source>
        <tissue>Platelet</tissue>
    </source>
</reference>
<reference key="14">
    <citation type="submission" date="2008-03" db="UniProtKB">
        <authorList>
            <person name="Bienvenut W.V."/>
            <person name="Heiserich L."/>
            <person name="Gottlieb E."/>
        </authorList>
    </citation>
    <scope>PROTEIN SEQUENCE OF 2-18; 30-53; 55-64; 72-83; 116-124; 165-177; 237-269; 335-368; 393-400 AND 418-438</scope>
    <scope>CLEAVAGE OF INITIATOR METHIONINE</scope>
    <scope>ACETYLATION AT ALA-2</scope>
    <scope>IDENTIFICATION BY MASS SPECTROMETRY</scope>
    <source>
        <tissue>Colon carcinoma</tissue>
    </source>
</reference>
<reference key="15">
    <citation type="journal article" date="2000" name="Cell">
        <title>Involvement of the TIP60 histone acetylase complex in DNA repair and apoptosis.</title>
        <authorList>
            <person name="Ikura T."/>
            <person name="Ogryzko V.V."/>
            <person name="Grigoriev M."/>
            <person name="Groisman R."/>
            <person name="Wang J."/>
            <person name="Horikoshi M."/>
            <person name="Scully R."/>
            <person name="Qin J."/>
            <person name="Nakatani Y."/>
        </authorList>
    </citation>
    <scope>PROTEIN SEQUENCE OF 30-40; 185-197; 354-365 AND 417-427</scope>
    <scope>IDENTIFICATION IN THE NUA4 COMPLEX</scope>
    <scope>IDENTIFICATION BY MASS SPECTROMETRY</scope>
</reference>
<reference key="16">
    <citation type="journal article" date="2003" name="J. Biol. Chem.">
        <title>Identification of new subunits of the multiprotein mammalian TRRAP/TIP60-containing histone acetyltransferase complex.</title>
        <authorList>
            <person name="Cai Y."/>
            <person name="Jin J."/>
            <person name="Tomomori-Sato C."/>
            <person name="Sato S."/>
            <person name="Sorokina I."/>
            <person name="Parmely T.J."/>
            <person name="Conaway R.C."/>
            <person name="Conaway J.W."/>
        </authorList>
    </citation>
    <scope>PROTEIN SEQUENCE OF 30-40; 72-83; 165-177; 187-197; 254-269; 354-365; 418-438 AND 445-463</scope>
    <scope>IDENTIFICATION IN NUA4 COMPLEX</scope>
    <scope>IDENTIFICATION BY MASS SPECTROMETRY</scope>
</reference>
<reference key="17">
    <citation type="journal article" date="2001" name="Mol. Cell. Biol.">
        <title>TIP49b, a regulator of activating transcription factor 2 response to stress and DNA damage.</title>
        <authorList>
            <person name="Cho S.-G."/>
            <person name="Bhoumik A."/>
            <person name="Broday L."/>
            <person name="Ivanov V."/>
            <person name="Rosenstein B."/>
            <person name="Ronai Z."/>
        </authorList>
    </citation>
    <scope>INTERACTION WITH ATF2</scope>
    <scope>FUNCTION</scope>
</reference>
<reference key="18">
    <citation type="journal article" date="2004" name="Mol. Cell. Biol.">
        <title>Structural and functional conservation of the NuA4 histone acetyltransferase complex from yeast to humans.</title>
        <authorList>
            <person name="Doyon Y."/>
            <person name="Selleck W."/>
            <person name="Lane W.S."/>
            <person name="Tan S."/>
            <person name="Cote J."/>
        </authorList>
    </citation>
    <scope>FUNCTION</scope>
    <scope>IDENTIFICATION BY MASS SPECTROMETRY</scope>
    <scope>IDENTIFICATION IN NUA4 COMPLEX</scope>
    <scope>IDENTIFICATION IN A NUA4-RELATED SRCAP-CONTAINING COMPLEX</scope>
</reference>
<reference key="19">
    <citation type="journal article" date="2005" name="Cell">
        <title>Physical association and coordinate function of the H3 K4 methyltransferase MLL1 and the H4 K16 acetyltransferase MOF.</title>
        <authorList>
            <person name="Dou Y."/>
            <person name="Milne T.A."/>
            <person name="Tackett A.J."/>
            <person name="Smith E.R."/>
            <person name="Fukuda A."/>
            <person name="Wysocka J."/>
            <person name="Allis C.D."/>
            <person name="Chait B.T."/>
            <person name="Hess J.L."/>
            <person name="Roeder R.G."/>
        </authorList>
    </citation>
    <scope>IDENTIFICATION IN THE MLL1/MLL COMPLEX</scope>
</reference>
<reference key="20">
    <citation type="journal article" date="2005" name="J. Biol. Chem.">
        <title>A mammalian chromatin remodeling complex with similarities to the yeast INO80 complex.</title>
        <authorList>
            <person name="Jin J."/>
            <person name="Cai Y."/>
            <person name="Yao T."/>
            <person name="Gottschalk A.J."/>
            <person name="Florens L."/>
            <person name="Swanson S.K."/>
            <person name="Gutierrez J.L."/>
            <person name="Coleman M.K."/>
            <person name="Workman J.L."/>
            <person name="Mushegian A."/>
            <person name="Washburn M.P."/>
            <person name="Conaway R.C."/>
            <person name="Conaway J.W."/>
        </authorList>
    </citation>
    <scope>IDENTIFICATION IN INO80 COMPLEX</scope>
    <scope>IDENTIFICATION BY MASS SPECTROMETRY</scope>
    <scope>FUNCTION</scope>
</reference>
<reference key="21">
    <citation type="journal article" date="2005" name="J. Cell Sci.">
        <title>The histidine triad protein Hint1 interacts with Pontin and Reptin and inhibits TCF-beta-catenin-mediated transcription.</title>
        <authorList>
            <person name="Weiske J."/>
            <person name="Huber O."/>
        </authorList>
    </citation>
    <scope>INTERACTION WITH HINT1</scope>
    <scope>FUNCTION</scope>
</reference>
<reference key="22">
    <citation type="journal article" date="2007" name="J. Mol. Biol.">
        <title>Dodecameric structure and ATPase activity of the human TIP48/TIP49 complex.</title>
        <authorList>
            <person name="Puri T."/>
            <person name="Wendler P."/>
            <person name="Sigala B."/>
            <person name="Saibil H."/>
            <person name="Tsaneva I.R."/>
        </authorList>
    </citation>
    <scope>SUBUNIT</scope>
    <scope>FUNCTION</scope>
    <scope>MUTAGENESIS OF ASP-299</scope>
    <scope>ELECTRON MICROSCOPY OF THE RUVBL1-RUVBL2 HETEROMER</scope>
</reference>
<reference key="23">
    <citation type="journal article" date="2007" name="Nat. Struct. Mol. Biol.">
        <title>A YY1-INO80 complex regulates genomic stability through homologous recombination-based repair.</title>
        <authorList>
            <person name="Wu S."/>
            <person name="Shi Y."/>
            <person name="Mulligan P."/>
            <person name="Gay F."/>
            <person name="Landry J."/>
            <person name="Liu H."/>
            <person name="Lu J."/>
            <person name="Qi H.H."/>
            <person name="Wang W."/>
            <person name="Nickoloff J.A."/>
            <person name="Wu C."/>
            <person name="Shi Y."/>
        </authorList>
    </citation>
    <scope>IDENTIFICATION IN THE INO80 COMPLEX</scope>
    <scope>PROTEIN INTERACTION</scope>
</reference>
<reference key="24">
    <citation type="journal article" date="2008" name="Mol. Cell. Biol.">
        <title>Transcriptional activation of histone genes requires NPAT-dependent recruitment of TRRAP-Tip60 complex to histone promoters during the G1/S phase transition.</title>
        <authorList>
            <person name="DeRan M."/>
            <person name="Pulvino M."/>
            <person name="Greene E."/>
            <person name="Su C."/>
            <person name="Zhao J."/>
        </authorList>
    </citation>
    <scope>IDENTIFICATION BY MASS SPECTROMETRY</scope>
    <scope>INTERACTION WITH NPAT</scope>
</reference>
<reference key="25">
    <citation type="journal article" date="2009" name="Anal. Chem.">
        <title>Lys-N and trypsin cover complementary parts of the phosphoproteome in a refined SCX-based approach.</title>
        <authorList>
            <person name="Gauci S."/>
            <person name="Helbig A.O."/>
            <person name="Slijper M."/>
            <person name="Krijgsveld J."/>
            <person name="Heck A.J."/>
            <person name="Mohammed S."/>
        </authorList>
    </citation>
    <scope>ACETYLATION [LARGE SCALE ANALYSIS] AT ALA-2</scope>
    <scope>CLEAVAGE OF INITIATOR METHIONINE [LARGE SCALE ANALYSIS]</scope>
    <scope>IDENTIFICATION BY MASS SPECTROMETRY [LARGE SCALE ANALYSIS]</scope>
</reference>
<reference key="26">
    <citation type="journal article" date="2009" name="Hum. Mol. Genet.">
        <title>Biochemical and genetic evidence for a role of IGHMBP2 in the translational machinery.</title>
        <authorList>
            <person name="de Planell-Saguer M."/>
            <person name="Schroeder D.G."/>
            <person name="Rodicio M.C."/>
            <person name="Cox G.A."/>
            <person name="Mourelatos Z."/>
        </authorList>
    </citation>
    <scope>INTERACTION WITH IGHMBP2</scope>
</reference>
<reference key="27">
    <citation type="journal article" date="2009" name="J. Biol. Chem.">
        <title>Endosomal adaptor proteins APPL1 and APPL2 are novel activators of beta-catenin/TCF-mediated transcription.</title>
        <authorList>
            <person name="Rashid S."/>
            <person name="Pilecka I."/>
            <person name="Torun A."/>
            <person name="Olchowik M."/>
            <person name="Bielinska B."/>
            <person name="Miaczynska M."/>
        </authorList>
    </citation>
    <scope>INTERACTION WITH APPL1 AND APPL2</scope>
</reference>
<reference key="28">
    <citation type="journal article" date="2010" name="Genes Dev.">
        <title>Tel2 structure and function in the Hsp90-dependent maturation of mTOR and ATR complexes.</title>
        <authorList>
            <person name="Takai H."/>
            <person name="Xie Y."/>
            <person name="de Lange T."/>
            <person name="Pavletich N.P."/>
        </authorList>
    </citation>
    <scope>INTERACTION WITH TELO2</scope>
</reference>
<reference key="29">
    <citation type="journal article" date="2010" name="Mol. Cell">
        <title>CK2 phospho-dependent binding of R2TP complex to TEL2 is essential for mTOR and SMG1 stability.</title>
        <authorList>
            <person name="Horejsi Z."/>
            <person name="Takai H."/>
            <person name="Adelman C.A."/>
            <person name="Collis S.J."/>
            <person name="Flynn H."/>
            <person name="Maslen S."/>
            <person name="Skehel J.M."/>
            <person name="de Lange T."/>
            <person name="Boulton S.J."/>
        </authorList>
    </citation>
    <scope>IDENTIFICATION IN THE R2TP COMPLEX</scope>
</reference>
<reference key="30">
    <citation type="journal article" date="2011" name="BMC Syst. Biol.">
        <title>Initial characterization of the human central proteome.</title>
        <authorList>
            <person name="Burkard T.R."/>
            <person name="Planyavsky M."/>
            <person name="Kaupe I."/>
            <person name="Breitwieser F.P."/>
            <person name="Buerckstuemmer T."/>
            <person name="Bennett K.L."/>
            <person name="Superti-Furga G."/>
            <person name="Colinge J."/>
        </authorList>
    </citation>
    <scope>IDENTIFICATION BY MASS SPECTROMETRY [LARGE SCALE ANALYSIS]</scope>
</reference>
<reference key="31">
    <citation type="journal article" date="2011" name="J. Biol. Chem.">
        <title>Subunit organization of the human INO80 chromatin remodeling complex: An evolutionarily conserved core complex catalyzes ATP-dependent nucleosome remodeling.</title>
        <authorList>
            <person name="Chen L."/>
            <person name="Cai Y."/>
            <person name="Jin J."/>
            <person name="Florens L."/>
            <person name="Swanson S.K."/>
            <person name="Washburn M.P."/>
            <person name="Conaway J.W."/>
            <person name="Conaway R.C."/>
        </authorList>
    </citation>
    <scope>IDENTIFICATION IN THE INO80 COMPLEX</scope>
    <scope>FUNCTION</scope>
</reference>
<reference key="32">
    <citation type="journal article" date="2012" name="Proc. Natl. Acad. Sci. U.S.A.">
        <title>N-terminal acetylome analyses and functional insights of the N-terminal acetyltransferase NatB.</title>
        <authorList>
            <person name="Van Damme P."/>
            <person name="Lasa M."/>
            <person name="Polevoda B."/>
            <person name="Gazquez C."/>
            <person name="Elosegui-Artola A."/>
            <person name="Kim D.S."/>
            <person name="De Juan-Pardo E."/>
            <person name="Demeyer K."/>
            <person name="Hole K."/>
            <person name="Larrea E."/>
            <person name="Timmerman E."/>
            <person name="Prieto J."/>
            <person name="Arnesen T."/>
            <person name="Sherman F."/>
            <person name="Gevaert K."/>
            <person name="Aldabe R."/>
        </authorList>
    </citation>
    <scope>ACETYLATION [LARGE SCALE ANALYSIS] AT ALA-2</scope>
    <scope>CLEAVAGE OF INITIATOR METHIONINE [LARGE SCALE ANALYSIS]</scope>
    <scope>IDENTIFICATION BY MASS SPECTROMETRY [LARGE SCALE ANALYSIS]</scope>
</reference>
<reference key="33">
    <citation type="journal article" date="2013" name="J. Proteome Res.">
        <title>Toward a comprehensive characterization of a human cancer cell phosphoproteome.</title>
        <authorList>
            <person name="Zhou H."/>
            <person name="Di Palma S."/>
            <person name="Preisinger C."/>
            <person name="Peng M."/>
            <person name="Polat A.N."/>
            <person name="Heck A.J."/>
            <person name="Mohammed S."/>
        </authorList>
    </citation>
    <scope>PHOSPHORYLATION [LARGE SCALE ANALYSIS] AT SER-437</scope>
    <scope>IDENTIFICATION BY MASS SPECTROMETRY [LARGE SCALE ANALYSIS]</scope>
    <source>
        <tissue>Cervix carcinoma</tissue>
        <tissue>Erythroleukemia</tissue>
    </source>
</reference>
<reference key="34">
    <citation type="journal article" date="2014" name="Elife">
        <title>LINKIN, a new transmembrane protein necessary for cell adhesion.</title>
        <authorList>
            <person name="Kato M."/>
            <person name="Chou T.F."/>
            <person name="Yu C.Z."/>
            <person name="DeModena J."/>
            <person name="Sternberg P.W."/>
        </authorList>
    </citation>
    <scope>INTERACTION WITH ITFG1</scope>
</reference>
<reference key="35">
    <citation type="journal article" date="2014" name="J. Proteomics">
        <title>An enzyme assisted RP-RPLC approach for in-depth analysis of human liver phosphoproteome.</title>
        <authorList>
            <person name="Bian Y."/>
            <person name="Song C."/>
            <person name="Cheng K."/>
            <person name="Dong M."/>
            <person name="Wang F."/>
            <person name="Huang J."/>
            <person name="Sun D."/>
            <person name="Wang L."/>
            <person name="Ye M."/>
            <person name="Zou H."/>
        </authorList>
    </citation>
    <scope>IDENTIFICATION BY MASS SPECTROMETRY [LARGE SCALE ANALYSIS]</scope>
    <source>
        <tissue>Liver</tissue>
    </source>
</reference>
<reference key="36">
    <citation type="journal article" date="2014" name="Nature">
        <title>ANP32E is a histone chaperone that removes H2A.Z from chromatin.</title>
        <authorList>
            <person name="Obri A."/>
            <person name="Ouararhni K."/>
            <person name="Papin C."/>
            <person name="Diebold M.L."/>
            <person name="Padmanabhan K."/>
            <person name="Marek M."/>
            <person name="Stoll I."/>
            <person name="Roy L."/>
            <person name="Reilly P.T."/>
            <person name="Mak T.W."/>
            <person name="Dimitrov S."/>
            <person name="Romier C."/>
            <person name="Hamiche A."/>
        </authorList>
    </citation>
    <scope>FUNCTION</scope>
    <scope>IDENTIFICATION IN THE SWR1-LIKE COMPLEX</scope>
</reference>
<reference key="37">
    <citation type="journal article" date="2015" name="EMBO Rep.">
        <title>Genome-wide screen identifies a novel p97/CDC-48-dependent pathway regulating ER-stress-induced gene transcription.</title>
        <authorList>
            <person name="Marza E."/>
            <person name="Taouji S."/>
            <person name="Barroso K."/>
            <person name="Raymond A.A."/>
            <person name="Guignard L."/>
            <person name="Bonneu M."/>
            <person name="Pallares-Lupon N."/>
            <person name="Dupuy J.W."/>
            <person name="Fernandez-Zapico M.E."/>
            <person name="Rosenbaum J."/>
            <person name="Palladino F."/>
            <person name="Dupuy D."/>
            <person name="Chevet E."/>
        </authorList>
    </citation>
    <scope>FUNCTION</scope>
</reference>
<reference key="38">
    <citation type="journal article" date="2015" name="Proteomics">
        <title>N-terminome analysis of the human mitochondrial proteome.</title>
        <authorList>
            <person name="Vaca Jacome A.S."/>
            <person name="Rabilloud T."/>
            <person name="Schaeffer-Reiss C."/>
            <person name="Rompais M."/>
            <person name="Ayoub D."/>
            <person name="Lane L."/>
            <person name="Bairoch A."/>
            <person name="Van Dorsselaer A."/>
            <person name="Carapito C."/>
        </authorList>
    </citation>
    <scope>ACETYLATION [LARGE SCALE ANALYSIS] AT ALA-2</scope>
    <scope>CLEAVAGE OF INITIATOR METHIONINE [LARGE SCALE ANALYSIS]</scope>
    <scope>IDENTIFICATION BY MASS SPECTROMETRY [LARGE SCALE ANALYSIS]</scope>
</reference>
<reference key="39">
    <citation type="journal article" date="2016" name="Dev. Cell">
        <title>WAC regulates mTOR activity by acting as an adaptor for the TTT and Pontin/Reptin complexes.</title>
        <authorList>
            <person name="David-Morrison G."/>
            <person name="Xu Z."/>
            <person name="Rui Y.N."/>
            <person name="Charng W.L."/>
            <person name="Jaiswal M."/>
            <person name="Yamamoto S."/>
            <person name="Xiong B."/>
            <person name="Zhang K."/>
            <person name="Sandoval H."/>
            <person name="Duraine L."/>
            <person name="Zuo Z."/>
            <person name="Zhang S."/>
            <person name="Bellen H.J."/>
        </authorList>
    </citation>
    <scope>INTERACTION WITH WAC</scope>
</reference>
<reference key="40">
    <citation type="journal article" date="2017" name="Nat. Commun.">
        <title>R2TP/Prefoldin-like component RUVBL1/RUVBL2 directly interacts with ZNHIT2 to regulate assembly of U5 small nuclear ribonucleoprotein.</title>
        <authorList>
            <person name="Cloutier P."/>
            <person name="Poitras C."/>
            <person name="Durand M."/>
            <person name="Hekmat O."/>
            <person name="Fiola-Masson E."/>
            <person name="Bouchard A."/>
            <person name="Faubert D."/>
            <person name="Chabot B."/>
            <person name="Coulombe B."/>
        </authorList>
    </citation>
    <scope>FUNCTION</scope>
    <scope>INTERACTION WITH ZNHIT1; ZNHIT2; ZNHIT3; ZNHIT6 AND DDX59</scope>
</reference>
<reference key="41">
    <citation type="journal article" date="2017" name="Nat. Struct. Mol. Biol.">
        <title>Site-specific mapping of the human SUMO proteome reveals co-modification with phosphorylation.</title>
        <authorList>
            <person name="Hendriks I.A."/>
            <person name="Lyon D."/>
            <person name="Young C."/>
            <person name="Jensen L.J."/>
            <person name="Vertegaal A.C."/>
            <person name="Nielsen M.L."/>
        </authorList>
    </citation>
    <scope>SUMOYLATION [LARGE SCALE ANALYSIS] AT LYS-9; LYS-444 AND LYS-456</scope>
    <scope>IDENTIFICATION BY MASS SPECTROMETRY [LARGE SCALE ANALYSIS]</scope>
</reference>
<reference key="42">
    <citation type="journal article" date="2018" name="PLoS Genet.">
        <title>ZMYND10 stabilizes intermediate chain proteins in the cytoplasmic pre-assembly of dynein arms.</title>
        <authorList>
            <person name="Cho K.J."/>
            <person name="Noh S.H."/>
            <person name="Han S.M."/>
            <person name="Choi W.I."/>
            <person name="Kim H.Y."/>
            <person name="Yu S."/>
            <person name="Lee J.S."/>
            <person name="Rim J.H."/>
            <person name="Lee M.G."/>
            <person name="Hildebrandt F."/>
            <person name="Gee H.Y."/>
        </authorList>
    </citation>
    <scope>INTERACTION WITH ZMYND10</scope>
</reference>
<reference key="43">
    <citation type="journal article" date="2019" name="PLoS Pathog.">
        <title>The R2TP complex regulates paramyxovirus RNA synthesis.</title>
        <authorList>
            <person name="Katoh H."/>
            <person name="Sekizuka T."/>
            <person name="Nakatsu Y."/>
            <person name="Nakagawa R."/>
            <person name="Nao N."/>
            <person name="Sakata M."/>
            <person name="Kato F."/>
            <person name="Kuroda M."/>
            <person name="Kidokoro M."/>
            <person name="Takeda M."/>
        </authorList>
    </citation>
    <scope>INTERACTION WITH MUMPS VIRUS L POLYMERASE (MICROBIAL INFECTION)</scope>
</reference>
<reference key="44">
    <citation type="journal article" date="2020" name="J. Proteome Res.">
        <title>Upstream ORF-Encoded ASDURF Is a Novel Prefoldin-like Subunit of the PAQosome.</title>
        <authorList>
            <person name="Cloutier P."/>
            <person name="Poitras C."/>
            <person name="Faubert D."/>
            <person name="Bouchard A."/>
            <person name="Blanchette M."/>
            <person name="Gauthier M.S."/>
            <person name="Coulombe B."/>
        </authorList>
    </citation>
    <scope>IDENTIFICATION IN THE PAQOSOME COMPLEX</scope>
    <scope>IDENTIFICATION BY MASS SPECTROMETRY</scope>
</reference>
<reference key="45">
    <citation type="journal article" date="2021" name="Nucleic Acids Res.">
        <title>NOPCHAP1 is a PAQosome cofactor that helps loading NOP58 on RUVBL1/2 during box C/D snoRNP biogenesis.</title>
        <authorList>
            <person name="Abel Y."/>
            <person name="Paiva A.C.F."/>
            <person name="Bizarro J."/>
            <person name="Chagot M.E."/>
            <person name="Santo P.E."/>
            <person name="Robert M.C."/>
            <person name="Quinternet M."/>
            <person name="Vandermoere F."/>
            <person name="Sousa P.M.F."/>
            <person name="Fort P."/>
            <person name="Charpentier B."/>
            <person name="Manival X."/>
            <person name="Bandeiras T.M."/>
            <person name="Bertrand E."/>
            <person name="Verheggen C."/>
        </authorList>
    </citation>
    <scope>INTERACTION WITH NOPCHAP1</scope>
    <scope>MUTAGENESIS OF LYS-83 AND GLU-300</scope>
</reference>
<reference key="46">
    <citation type="submission" date="2005-11" db="PDB data bank">
        <title>Solution structure of RSGI RUH-039, a fragment of C-terminal domain of RuvB-like 2 from human cDNA.</title>
        <authorList>
            <consortium name="Mycobacterium tuberculosis structural genomics consortium (TB)"/>
        </authorList>
    </citation>
    <scope>STRUCTURE BY NMR OF 132-213</scope>
</reference>
<reference evidence="34" key="47">
    <citation type="journal article" date="2020" name="Elife">
        <title>Regulation of RUVBL1-RUVBL2 AAA-ATPases by the nonsense-mediated mRNA decay factor DHX34, as evidenced by Cryo-EM.</title>
        <authorList>
            <person name="Lopez-Perrote A."/>
            <person name="Hug N."/>
            <person name="Gonzalez-Corpas A."/>
            <person name="Rodriguez C.F."/>
            <person name="Serna M."/>
            <person name="Garcia-Martin C."/>
            <person name="Boskovic J."/>
            <person name="Fernandez-Leiro R."/>
            <person name="Caceres J.F."/>
            <person name="Llorca O."/>
        </authorList>
    </citation>
    <scope>STRUCTURE BY ELECTRON MICROSCOPY (4.18 ANGSTROMS) IN COMPLEX WITH RUVBL1</scope>
    <scope>SUBUNIT</scope>
    <scope>INTERACTION WITH SMG1 AND DHX34</scope>
    <scope>MUTAGENESIS OF GLU-300</scope>
</reference>
<gene>
    <name type="primary">RUVBL2</name>
    <name type="synonym">INO80J</name>
    <name type="synonym">TIP48</name>
    <name type="synonym">TIP49B</name>
    <name type="ORF">CGI-46</name>
</gene>
<protein>
    <recommendedName>
        <fullName>RuvB-like 2</fullName>
        <ecNumber evidence="2 12">3.6.4.12</ecNumber>
    </recommendedName>
    <alternativeName>
        <fullName>48 kDa TATA box-binding protein-interacting protein</fullName>
        <shortName>48 kDa TBP-interacting protein</shortName>
    </alternativeName>
    <alternativeName>
        <fullName>51 kDa erythrocyte cytosolic protein</fullName>
        <shortName>ECP-51</shortName>
    </alternativeName>
    <alternativeName>
        <fullName>INO80 complex subunit J</fullName>
    </alternativeName>
    <alternativeName>
        <fullName>Repressing pontin 52</fullName>
        <shortName>Reptin 52</shortName>
    </alternativeName>
    <alternativeName>
        <fullName>TIP49b</fullName>
    </alternativeName>
    <alternativeName>
        <fullName>TIP60-associated protein 54-beta</fullName>
        <shortName>TAP54-beta</shortName>
    </alternativeName>
</protein>